<gene>
    <name type="primary">HDAC7</name>
    <name type="synonym">HDAC7A</name>
</gene>
<protein>
    <recommendedName>
        <fullName>Histone deacetylase 7</fullName>
        <shortName>HD7</shortName>
        <ecNumber evidence="1">3.5.1.98</ecNumber>
    </recommendedName>
    <alternativeName>
        <fullName>Histone deacetylase 7A</fullName>
        <shortName>HD7a</shortName>
    </alternativeName>
    <alternativeName>
        <fullName evidence="21">Protein deacetylase HDAC7</fullName>
        <ecNumber evidence="16">3.5.1.-</ecNumber>
    </alternativeName>
</protein>
<feature type="chain" id="PRO_0000114705" description="Histone deacetylase 7">
    <location>
        <begin position="1"/>
        <end position="952"/>
    </location>
</feature>
<feature type="region of interest" description="Transcription repression 1" evidence="1">
    <location>
        <begin position="1"/>
        <end position="268"/>
    </location>
</feature>
<feature type="region of interest" description="Interaction with MEF2A" evidence="1">
    <location>
        <begin position="49"/>
        <end position="149"/>
    </location>
</feature>
<feature type="region of interest" description="Disordered" evidence="2">
    <location>
        <begin position="130"/>
        <end position="224"/>
    </location>
</feature>
<feature type="region of interest" description="Transcription repression 2" evidence="1">
    <location>
        <begin position="218"/>
        <end position="546"/>
    </location>
</feature>
<feature type="region of interest" description="Disordered" evidence="2">
    <location>
        <begin position="261"/>
        <end position="283"/>
    </location>
</feature>
<feature type="region of interest" description="Disordered" evidence="2">
    <location>
        <begin position="349"/>
        <end position="377"/>
    </location>
</feature>
<feature type="region of interest" description="Disordered" evidence="2">
    <location>
        <begin position="389"/>
        <end position="441"/>
    </location>
</feature>
<feature type="region of interest" description="Disordered" evidence="2">
    <location>
        <begin position="460"/>
        <end position="510"/>
    </location>
</feature>
<feature type="region of interest" description="Histone deacetylase" evidence="1">
    <location>
        <begin position="512"/>
        <end position="865"/>
    </location>
</feature>
<feature type="region of interest" description="Interaction with SIN3A" evidence="1">
    <location>
        <begin position="877"/>
        <end position="952"/>
    </location>
</feature>
<feature type="short sequence motif" description="Nuclear export signal" evidence="1">
    <location>
        <begin position="917"/>
        <end position="952"/>
    </location>
</feature>
<feature type="compositionally biased region" description="Basic and acidic residues" evidence="2">
    <location>
        <begin position="167"/>
        <end position="181"/>
    </location>
</feature>
<feature type="compositionally biased region" description="Low complexity" evidence="2">
    <location>
        <begin position="197"/>
        <end position="212"/>
    </location>
</feature>
<feature type="compositionally biased region" description="Pro residues" evidence="2">
    <location>
        <begin position="360"/>
        <end position="374"/>
    </location>
</feature>
<feature type="compositionally biased region" description="Low complexity" evidence="2">
    <location>
        <begin position="482"/>
        <end position="503"/>
    </location>
</feature>
<feature type="active site" evidence="1">
    <location>
        <position position="670"/>
    </location>
</feature>
<feature type="binding site" evidence="12">
    <location>
        <position position="533"/>
    </location>
    <ligand>
        <name>Zn(2+)</name>
        <dbReference type="ChEBI" id="CHEBI:29105"/>
    </ligand>
</feature>
<feature type="binding site" evidence="12">
    <location>
        <position position="535"/>
    </location>
    <ligand>
        <name>Zn(2+)</name>
        <dbReference type="ChEBI" id="CHEBI:29105"/>
    </ligand>
</feature>
<feature type="binding site" evidence="12">
    <location>
        <position position="541"/>
    </location>
    <ligand>
        <name>Zn(2+)</name>
        <dbReference type="ChEBI" id="CHEBI:29105"/>
    </ligand>
</feature>
<feature type="binding site" evidence="12">
    <location>
        <position position="618"/>
    </location>
    <ligand>
        <name>Zn(2+)</name>
        <dbReference type="ChEBI" id="CHEBI:29105"/>
    </ligand>
</feature>
<feature type="site" description="Contributes to catalysis" evidence="12">
    <location>
        <position position="843"/>
    </location>
</feature>
<feature type="modified residue" description="Phosphoserine" evidence="23 27">
    <location>
        <position position="109"/>
    </location>
</feature>
<feature type="modified residue" description="Phosphoserine; by MARK2, MARK3 and PKD/PRKD1" evidence="22">
    <location>
        <position position="155"/>
    </location>
</feature>
<feature type="modified residue" description="Phosphoserine; by PKD/PRKD2" evidence="8 11 25 26 27">
    <location>
        <position position="181"/>
    </location>
</feature>
<feature type="modified residue" description="Phosphoserine" evidence="23 25">
    <location>
        <position position="283"/>
    </location>
</feature>
<feature type="modified residue" description="Phosphothreonine" evidence="23 25">
    <location>
        <position position="286"/>
    </location>
</feature>
<feature type="modified residue" description="Phosphoserine; by PKD/PRKD1" evidence="1">
    <location>
        <position position="358"/>
    </location>
</feature>
<feature type="modified residue" description="Phosphoserine" evidence="28">
    <location>
        <position position="364"/>
    </location>
</feature>
<feature type="modified residue" description="Phosphoserine" evidence="27">
    <location>
        <position position="405"/>
    </location>
</feature>
<feature type="modified residue" description="Phosphoserine" evidence="23 24 26 27 28">
    <location>
        <position position="486"/>
    </location>
</feature>
<feature type="modified residue" description="Phosphoserine" evidence="27">
    <location>
        <position position="487"/>
    </location>
</feature>
<feature type="modified residue" description="Phosphoserine" evidence="27">
    <location>
        <position position="507"/>
    </location>
</feature>
<feature type="modified residue" description="Phosphoserine" evidence="27">
    <location>
        <position position="595"/>
    </location>
</feature>
<feature type="splice variant" id="VSP_038102" description="In isoform 9." evidence="17">
    <location>
        <begin position="1"/>
        <end position="527"/>
    </location>
</feature>
<feature type="splice variant" id="VSP_007429" description="In isoform 2." evidence="17">
    <location>
        <begin position="1"/>
        <end position="472"/>
    </location>
</feature>
<feature type="splice variant" id="VSP_038103" description="In isoform 10." evidence="20">
    <location>
        <begin position="1"/>
        <end position="338"/>
    </location>
</feature>
<feature type="splice variant" id="VSP_038104" description="In isoform 5 and isoform 7." evidence="17 18">
    <original>M</original>
    <variation>MHSPGADGTQVSPGAHYCSPTGAGCPRPCADTPGPQPQPM</variation>
    <location>
        <position position="1"/>
    </location>
</feature>
<feature type="splice variant" id="VSP_038105" description="In isoform 6." evidence="17">
    <original>M</original>
    <variation>MHSPGAGCPRPCADTPGPQPQPM</variation>
    <location>
        <position position="1"/>
    </location>
</feature>
<feature type="splice variant" id="VSP_038106" description="In isoform 8." evidence="17">
    <original>M</original>
    <variation>MSDLRKRELGALFTSRGTGGVEWDGTQVSPGAHYCSPTGAGCPRPCADTPGPQPQPM</variation>
    <location>
        <position position="1"/>
    </location>
</feature>
<feature type="splice variant" id="VSP_008772" description="In isoform 3 and isoform 7." evidence="17 18 19">
    <location>
        <begin position="227"/>
        <end position="263"/>
    </location>
</feature>
<feature type="splice variant" id="VSP_007430" description="In isoform 4." evidence="21">
    <location>
        <begin position="227"/>
        <end position="256"/>
    </location>
</feature>
<feature type="splice variant" id="VSP_007431" description="In isoform 2." evidence="17">
    <original>LAQGGHRPLSRAQSSPAAPASLSAPEPASQARVLSSSETPARTLPFTT</original>
    <variation>MQACVGVRGVYPPGSMWVPAVAVLACSLQPRPWGVRTPWVPALTLAPA</variation>
    <location>
        <begin position="473"/>
        <end position="520"/>
    </location>
</feature>
<feature type="splice variant" id="VSP_038107" description="In isoform 8." evidence="17">
    <original>SKYWGCMQRLASCPDSWVPRVPGADKEEVEAVTALASLSVGILAEDRPSEQLVEEEEPMNL</original>
    <variation>MGALTLSQIPGHGSSQQQAGGAFSRPGHPCRAAVVMVNTGAACSAWPPVQTPGCLECQGLTKKKWRQ</variation>
    <location>
        <begin position="892"/>
        <end position="952"/>
    </location>
</feature>
<feature type="sequence variant" id="VAR_036043" description="In a breast cancer sample; somatic mutation; dbSNP:rs1165948169." evidence="7">
    <original>V</original>
    <variation>M</variation>
    <location>
        <position position="43"/>
    </location>
</feature>
<feature type="mutagenesis site" description="Abolishes phosphorylation at S-155." evidence="8">
    <original>L</original>
    <variation>A</variation>
    <location>
        <position position="150"/>
    </location>
</feature>
<feature type="mutagenesis site" description="Abolishes nuclear export; when associated with A-181; A-358 and A-486. Abolishes phosphorylation by MARK2 and MARK3, interaction with 14-3-3 and localization to the cytoplasm." evidence="8">
    <original>S</original>
    <variation>A</variation>
    <location>
        <position position="155"/>
    </location>
</feature>
<feature type="mutagenesis site" description="Abolishes nuclear export; when associated with A-155; A-358 and A-486." evidence="8">
    <original>S</original>
    <variation>A</variation>
    <location>
        <position position="181"/>
    </location>
</feature>
<feature type="mutagenesis site" description="Abolishes nuclear export; when associated with A-192; A-1118 and A-486." evidence="8">
    <original>S</original>
    <variation>A</variation>
    <location>
        <position position="358"/>
    </location>
</feature>
<feature type="mutagenesis site" description="Abolishes nuclear export; when associated with A-192; A-1118 and A-358." evidence="8">
    <original>S</original>
    <variation>A</variation>
    <location>
        <position position="486"/>
    </location>
</feature>
<feature type="mutagenesis site" description="Enhanced deacetylase activity." evidence="12">
    <original>H</original>
    <variation>A</variation>
    <location>
        <position position="843"/>
    </location>
</feature>
<feature type="mutagenesis site" description="Enhanced deacetylase activity." evidence="12">
    <original>H</original>
    <variation>F</variation>
    <location>
        <position position="843"/>
    </location>
</feature>
<feature type="mutagenesis site" description="6000 fold increase in deacetylase activity." evidence="12">
    <original>H</original>
    <variation>Y</variation>
    <location>
        <position position="843"/>
    </location>
</feature>
<feature type="sequence conflict" description="In Ref. 5; BAG64517." evidence="21" ref="5">
    <original>M</original>
    <variation>T</variation>
    <location>
        <position position="50"/>
    </location>
</feature>
<feature type="sequence conflict" description="In Ref. 1; AAF63491." evidence="21" ref="1">
    <location>
        <begin position="225"/>
        <end position="264"/>
    </location>
</feature>
<feature type="sequence conflict" description="In Ref. 5; BAA91545." evidence="21" ref="5">
    <original>P</original>
    <variation>L</variation>
    <location>
        <position position="276"/>
    </location>
</feature>
<feature type="sequence conflict" description="In Ref. 5; BAA91545." evidence="21" ref="5">
    <original>R</original>
    <variation>L</variation>
    <location>
        <position position="561"/>
    </location>
</feature>
<feature type="sequence conflict" description="In Ref. 1; AAF63491." evidence="21" ref="1">
    <original>V</original>
    <variation>E</variation>
    <location>
        <position position="614"/>
    </location>
</feature>
<feature type="sequence conflict" description="In Ref. 5; BAB15759." evidence="21" ref="5">
    <original>S</original>
    <variation>R</variation>
    <location>
        <position position="644"/>
    </location>
</feature>
<feature type="sequence conflict" description="In Ref. 5; BAA91474." evidence="21" ref="5">
    <original>R</original>
    <variation>W</variation>
    <location>
        <position position="665"/>
    </location>
</feature>
<feature type="sequence conflict" description="In Ref. 1; AAF63491." evidence="21" ref="1">
    <original>K</original>
    <variation>KASK</variation>
    <location>
        <position position="700"/>
    </location>
</feature>
<feature type="sequence conflict" description="In Ref. 5; BAA91545." evidence="21" ref="5">
    <original>G</original>
    <variation>S</variation>
    <location>
        <position position="750"/>
    </location>
</feature>
<feature type="sequence conflict" description="In Ref. 5; BAB55363." evidence="21" ref="5">
    <original>A</original>
    <variation>T</variation>
    <location>
        <position position="777"/>
    </location>
</feature>
<feature type="sequence conflict" description="In Ref. 5; BAA91474." evidence="21" ref="5">
    <original>Q</original>
    <variation>H</variation>
    <location>
        <position position="825"/>
    </location>
</feature>
<feature type="strand" evidence="29">
    <location>
        <begin position="520"/>
        <end position="523"/>
    </location>
</feature>
<feature type="helix" evidence="29">
    <location>
        <begin position="526"/>
        <end position="530"/>
    </location>
</feature>
<feature type="helix" evidence="29">
    <location>
        <begin position="538"/>
        <end position="540"/>
    </location>
</feature>
<feature type="helix" evidence="29">
    <location>
        <begin position="546"/>
        <end position="557"/>
    </location>
</feature>
<feature type="helix" evidence="29">
    <location>
        <begin position="561"/>
        <end position="563"/>
    </location>
</feature>
<feature type="strand" evidence="29">
    <location>
        <begin position="564"/>
        <end position="567"/>
    </location>
</feature>
<feature type="helix" evidence="29">
    <location>
        <begin position="574"/>
        <end position="577"/>
    </location>
</feature>
<feature type="turn" evidence="29">
    <location>
        <begin position="578"/>
        <end position="580"/>
    </location>
</feature>
<feature type="helix" evidence="29">
    <location>
        <begin position="583"/>
        <end position="590"/>
    </location>
</feature>
<feature type="helix" evidence="29">
    <location>
        <begin position="601"/>
        <end position="609"/>
    </location>
</feature>
<feature type="strand" evidence="29">
    <location>
        <begin position="621"/>
        <end position="626"/>
    </location>
</feature>
<feature type="turn" evidence="29">
    <location>
        <begin position="631"/>
        <end position="633"/>
    </location>
</feature>
<feature type="helix" evidence="29">
    <location>
        <begin position="634"/>
        <end position="653"/>
    </location>
</feature>
<feature type="strand" evidence="29">
    <location>
        <begin position="656"/>
        <end position="662"/>
    </location>
</feature>
<feature type="strand" evidence="29">
    <location>
        <begin position="680"/>
        <end position="682"/>
    </location>
</feature>
<feature type="helix" evidence="29">
    <location>
        <begin position="684"/>
        <end position="695"/>
    </location>
</feature>
<feature type="strand" evidence="29">
    <location>
        <begin position="701"/>
        <end position="705"/>
    </location>
</feature>
<feature type="strand" evidence="29">
    <location>
        <begin position="707"/>
        <end position="709"/>
    </location>
</feature>
<feature type="helix" evidence="29">
    <location>
        <begin position="712"/>
        <end position="718"/>
    </location>
</feature>
<feature type="strand" evidence="29">
    <location>
        <begin position="724"/>
        <end position="731"/>
    </location>
</feature>
<feature type="turn" evidence="29">
    <location>
        <begin position="733"/>
        <end position="736"/>
    </location>
</feature>
<feature type="helix" evidence="29">
    <location>
        <begin position="750"/>
        <end position="752"/>
    </location>
</feature>
<feature type="strand" evidence="29">
    <location>
        <begin position="756"/>
        <end position="761"/>
    </location>
</feature>
<feature type="strand" evidence="29">
    <location>
        <begin position="765"/>
        <end position="767"/>
    </location>
</feature>
<feature type="helix" evidence="29">
    <location>
        <begin position="771"/>
        <end position="780"/>
    </location>
</feature>
<feature type="helix" evidence="29">
    <location>
        <begin position="782"/>
        <end position="789"/>
    </location>
</feature>
<feature type="strand" evidence="29">
    <location>
        <begin position="792"/>
        <end position="798"/>
    </location>
</feature>
<feature type="helix" evidence="29">
    <location>
        <begin position="808"/>
        <end position="810"/>
    </location>
</feature>
<feature type="helix" evidence="29">
    <location>
        <begin position="817"/>
        <end position="827"/>
    </location>
</feature>
<feature type="helix" evidence="29">
    <location>
        <begin position="831"/>
        <end position="833"/>
    </location>
</feature>
<feature type="strand" evidence="29">
    <location>
        <begin position="835"/>
        <end position="839"/>
    </location>
</feature>
<feature type="helix" evidence="29">
    <location>
        <begin position="845"/>
        <end position="860"/>
    </location>
</feature>
<feature type="helix" evidence="29">
    <location>
        <begin position="866"/>
        <end position="868"/>
    </location>
</feature>
<feature type="helix" evidence="29">
    <location>
        <begin position="871"/>
        <end position="873"/>
    </location>
</feature>
<feature type="helix" evidence="29">
    <location>
        <begin position="878"/>
        <end position="891"/>
    </location>
</feature>
<feature type="turn" evidence="29">
    <location>
        <begin position="892"/>
        <end position="894"/>
    </location>
</feature>
<feature type="helix" evidence="29">
    <location>
        <begin position="896"/>
        <end position="898"/>
    </location>
</feature>
<comment type="function">
    <text evidence="1 5 9 15 16">Responsible for the deacetylation of lysine residues on the N-terminal part of the core histones (H2A, H2B, H3 and H4) (By similarity). Histone deacetylation gives a tag for epigenetic repression and plays an important role in transcriptional regulation, cell cycle progression and developmental events (By similarity). Histone deacetylases act via the formation of large multiprotein complexes (By similarity). Involved in muscle maturation by repressing transcription of myocyte enhancer factors such as MEF2A, MEF2B and MEF2C (By similarity). During muscle differentiation, it shuttles into the cytoplasm, allowing the expression of myocyte enhancer factors (By similarity). May be involved in Epstein-Barr virus (EBV) latency, possibly by repressing the viral BZLF1 gene (PubMed:12239305). Positively regulates the transcriptional repressor activity of FOXP3 (PubMed:17360565). Serves as a corepressor of RARA, causing its deacetylation and inhibition of RARE DNA element binding (PubMed:28167758). In association with RARA, plays a role in the repression of microRNA-10a and thereby in the inflammatory response (PubMed:28167758). Also acetylates non-histone proteins, such as ALKBH5 (PubMed:37369679).</text>
</comment>
<comment type="catalytic activity">
    <reaction evidence="1">
        <text>N(6)-acetyl-L-lysyl-[histone] + H2O = L-lysyl-[histone] + acetate</text>
        <dbReference type="Rhea" id="RHEA:58196"/>
        <dbReference type="Rhea" id="RHEA-COMP:9845"/>
        <dbReference type="Rhea" id="RHEA-COMP:11338"/>
        <dbReference type="ChEBI" id="CHEBI:15377"/>
        <dbReference type="ChEBI" id="CHEBI:29969"/>
        <dbReference type="ChEBI" id="CHEBI:30089"/>
        <dbReference type="ChEBI" id="CHEBI:61930"/>
        <dbReference type="EC" id="3.5.1.98"/>
    </reaction>
</comment>
<comment type="catalytic activity">
    <reaction evidence="16">
        <text>N(6)-acetyl-L-lysyl-[protein] + H2O = L-lysyl-[protein] + acetate</text>
        <dbReference type="Rhea" id="RHEA:58108"/>
        <dbReference type="Rhea" id="RHEA-COMP:9752"/>
        <dbReference type="Rhea" id="RHEA-COMP:10731"/>
        <dbReference type="ChEBI" id="CHEBI:15377"/>
        <dbReference type="ChEBI" id="CHEBI:29969"/>
        <dbReference type="ChEBI" id="CHEBI:30089"/>
        <dbReference type="ChEBI" id="CHEBI:61930"/>
    </reaction>
    <physiologicalReaction direction="left-to-right" evidence="16">
        <dbReference type="Rhea" id="RHEA:58109"/>
    </physiologicalReaction>
</comment>
<comment type="subunit">
    <text evidence="1 3 4 6 9 10 14 15">Interacts with HDAC1, HDAC2, HDAC3, HDAC4, HDAC5, NCOR1, NCOR2, SIN3A, SIN3B, RBBP4, RBBP7, MTA1L1, SAP30 and MBD3 (PubMed:11466315). Interacts with KAT5 and EDNRA (PubMed:11262386, PubMed:12551922). Interacts with the 14-3-3 protein YWHAE, MEF2A, MEF2B and MEF2C. Interacts with ZMYND15 (By similarity). Interacts with KDM5B (PubMed:17373667). Interacts with PML (PubMed:22155184). Interacts with FOXP3 (PubMed:17360565). Interacts with RARA (PubMed:28167758).</text>
</comment>
<comment type="interaction">
    <interactant intactId="EBI-1048378">
        <id>Q8WUI4</id>
    </interactant>
    <interactant intactId="EBI-297353">
        <id>P00533</id>
        <label>EGFR</label>
    </interactant>
    <organismsDiffer>false</organismsDiffer>
    <experiments>3</experiments>
</comment>
<comment type="interaction">
    <interactant intactId="EBI-1048378">
        <id>Q8WUI4</id>
    </interactant>
    <interactant intactId="EBI-9695448">
        <id>Q9BZS1-1</id>
        <label>FOXP3</label>
    </interactant>
    <organismsDiffer>false</organismsDiffer>
    <experiments>2</experiments>
</comment>
<comment type="interaction">
    <interactant intactId="EBI-1048378">
        <id>Q8WUI4</id>
    </interactant>
    <interactant intactId="EBI-16338471">
        <id>Q9BZS1-2</id>
        <label>FOXP3</label>
    </interactant>
    <organismsDiffer>false</organismsDiffer>
    <experiments>2</experiments>
</comment>
<comment type="interaction">
    <interactant intactId="EBI-1048378">
        <id>Q8WUI4</id>
    </interactant>
    <interactant intactId="EBI-1384325">
        <id>Q9BZL6</id>
        <label>PRKD2</label>
    </interactant>
    <organismsDiffer>false</organismsDiffer>
    <experiments>6</experiments>
</comment>
<comment type="interaction">
    <interactant intactId="EBI-1048378">
        <id>Q8WUI4</id>
    </interactant>
    <interactant intactId="EBI-476295">
        <id>P31947</id>
        <label>SFN</label>
    </interactant>
    <organismsDiffer>false</organismsDiffer>
    <experiments>3</experiments>
</comment>
<comment type="interaction">
    <interactant intactId="EBI-1048378">
        <id>Q8WUI4</id>
    </interactant>
    <interactant intactId="EBI-347088">
        <id>P63104</id>
        <label>YWHAZ</label>
    </interactant>
    <organismsDiffer>false</organismsDiffer>
    <experiments>5</experiments>
</comment>
<comment type="interaction">
    <interactant intactId="EBI-1048378">
        <id>Q8WUI4</id>
    </interactant>
    <interactant intactId="EBI-6148881">
        <id>P08393</id>
        <label>ICP0</label>
    </interactant>
    <organismsDiffer>true</organismsDiffer>
    <experiments>3</experiments>
</comment>
<comment type="interaction">
    <interactant intactId="EBI-1048378">
        <id>Q8WUI4</id>
    </interactant>
    <interactant intactId="EBI-643797">
        <id>Q8CFN5</id>
        <label>Mef2c</label>
    </interactant>
    <organismsDiffer>true</organismsDiffer>
    <experiments>2</experiments>
</comment>
<comment type="interaction">
    <interactant intactId="EBI-10276431">
        <id>Q8WUI4-5</id>
    </interactant>
    <interactant intactId="EBI-739580">
        <id>Q13137</id>
        <label>CALCOCO2</label>
    </interactant>
    <organismsDiffer>false</organismsDiffer>
    <experiments>3</experiments>
</comment>
<comment type="interaction">
    <interactant intactId="EBI-10276431">
        <id>Q8WUI4-5</id>
    </interactant>
    <interactant intactId="EBI-307352">
        <id>Q04864</id>
        <label>REL</label>
    </interactant>
    <organismsDiffer>false</organismsDiffer>
    <experiments>3</experiments>
</comment>
<comment type="interaction">
    <interactant intactId="EBI-10276431">
        <id>Q8WUI4-5</id>
    </interactant>
    <interactant intactId="EBI-10226430">
        <id>Q0D2K3</id>
        <label>RIPPLY1</label>
    </interactant>
    <organismsDiffer>false</organismsDiffer>
    <experiments>3</experiments>
</comment>
<comment type="interaction">
    <interactant intactId="EBI-12094670">
        <id>Q8WUI4-6</id>
    </interactant>
    <interactant intactId="EBI-17721098">
        <id>Q8WXI4-2</id>
        <label>ACOT11</label>
    </interactant>
    <organismsDiffer>false</organismsDiffer>
    <experiments>3</experiments>
</comment>
<comment type="interaction">
    <interactant intactId="EBI-12094670">
        <id>Q8WUI4-6</id>
    </interactant>
    <interactant intactId="EBI-713602">
        <id>Q9BQD7</id>
        <label>ANTKMT</label>
    </interactant>
    <organismsDiffer>false</organismsDiffer>
    <experiments>3</experiments>
</comment>
<comment type="interaction">
    <interactant intactId="EBI-12094670">
        <id>Q8WUI4-6</id>
    </interactant>
    <interactant intactId="EBI-948603">
        <id>Q03989</id>
        <label>ARID5A</label>
    </interactant>
    <organismsDiffer>false</organismsDiffer>
    <experiments>3</experiments>
</comment>
<comment type="interaction">
    <interactant intactId="EBI-12094670">
        <id>Q8WUI4-6</id>
    </interactant>
    <interactant intactId="EBI-10693038">
        <id>Q9NSI6-4</id>
        <label>BRWD1</label>
    </interactant>
    <organismsDiffer>false</organismsDiffer>
    <experiments>3</experiments>
</comment>
<comment type="interaction">
    <interactant intactId="EBI-12094670">
        <id>Q8WUI4-6</id>
    </interactant>
    <interactant intactId="EBI-18036948">
        <id>Q3SXR2</id>
        <label>C3orf36</label>
    </interactant>
    <organismsDiffer>false</organismsDiffer>
    <experiments>3</experiments>
</comment>
<comment type="interaction">
    <interactant intactId="EBI-12094670">
        <id>Q8WUI4-6</id>
    </interactant>
    <interactant intactId="EBI-739580">
        <id>Q13137</id>
        <label>CALCOCO2</label>
    </interactant>
    <organismsDiffer>false</organismsDiffer>
    <experiments>3</experiments>
</comment>
<comment type="interaction">
    <interactant intactId="EBI-12094670">
        <id>Q8WUI4-6</id>
    </interactant>
    <interactant intactId="EBI-81752">
        <id>P60953</id>
        <label>CDC42</label>
    </interactant>
    <organismsDiffer>false</organismsDiffer>
    <experiments>3</experiments>
</comment>
<comment type="interaction">
    <interactant intactId="EBI-12094670">
        <id>Q8WUI4-6</id>
    </interactant>
    <interactant intactId="EBI-2350265">
        <id>Q7L2Z9</id>
        <label>CENPQ</label>
    </interactant>
    <organismsDiffer>false</organismsDiffer>
    <experiments>3</experiments>
</comment>
<comment type="interaction">
    <interactant intactId="EBI-12094670">
        <id>Q8WUI4-6</id>
    </interactant>
    <interactant intactId="EBI-742054">
        <id>Q96D03</id>
        <label>DDIT4L</label>
    </interactant>
    <organismsDiffer>false</organismsDiffer>
    <experiments>3</experiments>
</comment>
<comment type="interaction">
    <interactant intactId="EBI-12094670">
        <id>Q8WUI4-6</id>
    </interactant>
    <interactant intactId="EBI-12260294">
        <id>Q9NQ30</id>
        <label>ESM1</label>
    </interactant>
    <organismsDiffer>false</organismsDiffer>
    <experiments>3</experiments>
</comment>
<comment type="interaction">
    <interactant intactId="EBI-12094670">
        <id>Q8WUI4-6</id>
    </interactant>
    <interactant intactId="EBI-358636">
        <id>Q9UBI6</id>
        <label>GNG12</label>
    </interactant>
    <organismsDiffer>false</organismsDiffer>
    <experiments>3</experiments>
</comment>
<comment type="interaction">
    <interactant intactId="EBI-12094670">
        <id>Q8WUI4-6</id>
    </interactant>
    <interactant intactId="EBI-5916454">
        <id>A6NEM1</id>
        <label>GOLGA6L9</label>
    </interactant>
    <organismsDiffer>false</organismsDiffer>
    <experiments>3</experiments>
</comment>
<comment type="interaction">
    <interactant intactId="EBI-12094670">
        <id>Q8WUI4-6</id>
    </interactant>
    <interactant intactId="EBI-12035052">
        <id>A5PKX9</id>
        <label>INADL</label>
    </interactant>
    <organismsDiffer>false</organismsDiffer>
    <experiments>3</experiments>
</comment>
<comment type="interaction">
    <interactant intactId="EBI-12094670">
        <id>Q8WUI4-6</id>
    </interactant>
    <interactant intactId="EBI-5457991">
        <id>Q9BXK1</id>
        <label>KLF16</label>
    </interactant>
    <organismsDiffer>false</organismsDiffer>
    <experiments>3</experiments>
</comment>
<comment type="interaction">
    <interactant intactId="EBI-12094670">
        <id>Q8WUI4-6</id>
    </interactant>
    <interactant intactId="EBI-13309813">
        <id>Q6ZNG9</id>
        <label>KRBA2</label>
    </interactant>
    <organismsDiffer>false</organismsDiffer>
    <experiments>3</experiments>
</comment>
<comment type="interaction">
    <interactant intactId="EBI-12094670">
        <id>Q8WUI4-6</id>
    </interactant>
    <interactant intactId="EBI-2865580">
        <id>O43679</id>
        <label>LDB2</label>
    </interactant>
    <organismsDiffer>false</organismsDiffer>
    <experiments>3</experiments>
</comment>
<comment type="interaction">
    <interactant intactId="EBI-12094670">
        <id>Q8WUI4-6</id>
    </interactant>
    <interactant intactId="EBI-16439278">
        <id>Q6FHY5</id>
        <label>MEOX2</label>
    </interactant>
    <organismsDiffer>false</organismsDiffer>
    <experiments>3</experiments>
</comment>
<comment type="interaction">
    <interactant intactId="EBI-12094670">
        <id>Q8WUI4-6</id>
    </interactant>
    <interactant intactId="EBI-6137472">
        <id>Q9BRT3</id>
        <label>MIEN1</label>
    </interactant>
    <organismsDiffer>false</organismsDiffer>
    <experiments>5</experiments>
</comment>
<comment type="interaction">
    <interactant intactId="EBI-12094670">
        <id>Q8WUI4-6</id>
    </interactant>
    <interactant intactId="EBI-14083835">
        <id>O94964-4</id>
        <label>MTCL2</label>
    </interactant>
    <organismsDiffer>false</organismsDiffer>
    <experiments>3</experiments>
</comment>
<comment type="interaction">
    <interactant intactId="EBI-12094670">
        <id>Q8WUI4-6</id>
    </interactant>
    <interactant intactId="EBI-302378">
        <id>O95411</id>
        <label>MYO18A</label>
    </interactant>
    <organismsDiffer>false</organismsDiffer>
    <experiments>3</experiments>
</comment>
<comment type="interaction">
    <interactant intactId="EBI-12094670">
        <id>Q8WUI4-6</id>
    </interactant>
    <interactant intactId="EBI-744871">
        <id>O00746</id>
        <label>NME4</label>
    </interactant>
    <organismsDiffer>false</organismsDiffer>
    <experiments>3</experiments>
</comment>
<comment type="interaction">
    <interactant intactId="EBI-12094670">
        <id>Q8WUI4-6</id>
    </interactant>
    <interactant intactId="EBI-3913975">
        <id>Q9BQI9</id>
        <label>NRIP2</label>
    </interactant>
    <organismsDiffer>false</organismsDiffer>
    <experiments>6</experiments>
</comment>
<comment type="interaction">
    <interactant intactId="EBI-12094670">
        <id>Q8WUI4-6</id>
    </interactant>
    <interactant intactId="EBI-14568740">
        <id>B7ZLY0</id>
        <label>PHC2</label>
    </interactant>
    <organismsDiffer>false</organismsDiffer>
    <experiments>3</experiments>
</comment>
<comment type="interaction">
    <interactant intactId="EBI-12094670">
        <id>Q8WUI4-6</id>
    </interactant>
    <interactant intactId="EBI-710402">
        <id>Q96I34</id>
        <label>PPP1R16A</label>
    </interactant>
    <organismsDiffer>false</organismsDiffer>
    <experiments>3</experiments>
</comment>
<comment type="interaction">
    <interactant intactId="EBI-12094670">
        <id>Q8WUI4-6</id>
    </interactant>
    <interactant intactId="EBI-413628">
        <id>P63000</id>
        <label>RAC1</label>
    </interactant>
    <organismsDiffer>false</organismsDiffer>
    <experiments>4</experiments>
</comment>
<comment type="interaction">
    <interactant intactId="EBI-12094670">
        <id>Q8WUI4-6</id>
    </interactant>
    <interactant intactId="EBI-489652">
        <id>P15153</id>
        <label>RAC2</label>
    </interactant>
    <organismsDiffer>false</organismsDiffer>
    <experiments>3</experiments>
</comment>
<comment type="interaction">
    <interactant intactId="EBI-12094670">
        <id>Q8WUI4-6</id>
    </interactant>
    <interactant intactId="EBI-767084">
        <id>P60763</id>
        <label>RAC3</label>
    </interactant>
    <organismsDiffer>false</organismsDiffer>
    <experiments>3</experiments>
</comment>
<comment type="interaction">
    <interactant intactId="EBI-12094670">
        <id>Q8WUI4-6</id>
    </interactant>
    <interactant intactId="EBI-10829018">
        <id>Q04864-2</id>
        <label>REL</label>
    </interactant>
    <organismsDiffer>false</organismsDiffer>
    <experiments>3</experiments>
</comment>
<comment type="interaction">
    <interactant intactId="EBI-12094670">
        <id>Q8WUI4-6</id>
    </interactant>
    <interactant intactId="EBI-10226430">
        <id>Q0D2K3</id>
        <label>RIPPLY1</label>
    </interactant>
    <organismsDiffer>false</organismsDiffer>
    <experiments>6</experiments>
</comment>
<comment type="interaction">
    <interactant intactId="EBI-12094670">
        <id>Q8WUI4-6</id>
    </interactant>
    <interactant intactId="EBI-491037">
        <id>P62070</id>
        <label>RRAS2</label>
    </interactant>
    <organismsDiffer>false</organismsDiffer>
    <experiments>3</experiments>
</comment>
<comment type="interaction">
    <interactant intactId="EBI-12094670">
        <id>Q8WUI4-6</id>
    </interactant>
    <interactant intactId="EBI-7600166">
        <id>O15427</id>
        <label>SLC16A3</label>
    </interactant>
    <organismsDiffer>false</organismsDiffer>
    <experiments>3</experiments>
</comment>
<comment type="interaction">
    <interactant intactId="EBI-12094670">
        <id>Q8WUI4-6</id>
    </interactant>
    <interactant intactId="EBI-12876508">
        <id>O95164</id>
        <label>UBL3</label>
    </interactant>
    <organismsDiffer>false</organismsDiffer>
    <experiments>3</experiments>
</comment>
<comment type="subcellular location">
    <subcellularLocation>
        <location evidence="3 8">Nucleus</location>
    </subcellularLocation>
    <subcellularLocation>
        <location evidence="8">Cytoplasm</location>
    </subcellularLocation>
    <text evidence="1 3 8">In the nucleus, it associates with distinct subnuclear dot-like structures (PubMed:11262386). Shuttles between the nucleus and the cytoplasm (PubMed:16980613). In muscle cells, it shuttles into the cytoplasm during myocyte differentiation (By similarity). The export to cytoplasm depends on the interaction with the 14-3-3 protein YWHAE and is due to its phosphorylation (PubMed:16980613).</text>
</comment>
<comment type="alternative products">
    <event type="alternative splicing"/>
    <isoform>
        <id>Q8WUI4-1</id>
        <name>1</name>
        <sequence type="displayed"/>
    </isoform>
    <isoform>
        <id>Q8WUI4-2</id>
        <name>2</name>
        <sequence type="described" ref="VSP_007429 VSP_007431"/>
    </isoform>
    <isoform>
        <id>Q8WUI4-3</id>
        <name>3</name>
        <sequence type="described" ref="VSP_008772"/>
    </isoform>
    <isoform>
        <id>Q8WUI4-4</id>
        <name>4</name>
        <sequence type="described" ref="VSP_007430"/>
    </isoform>
    <isoform>
        <id>Q8WUI4-5</id>
        <name>5</name>
        <sequence type="described" ref="VSP_038104"/>
    </isoform>
    <isoform>
        <id>Q8WUI4-6</id>
        <name>6</name>
        <sequence type="described" ref="VSP_038105"/>
    </isoform>
    <isoform>
        <id>Q8WUI4-7</id>
        <name>7</name>
        <sequence type="described" ref="VSP_038104 VSP_008772"/>
    </isoform>
    <isoform>
        <id>Q8WUI4-8</id>
        <name>8</name>
        <sequence type="described" ref="VSP_038106 VSP_038107"/>
    </isoform>
    <isoform>
        <id>Q8WUI4-9</id>
        <name>9</name>
        <sequence type="described" ref="VSP_038102"/>
    </isoform>
    <isoform>
        <id>Q8WUI4-10</id>
        <name>10</name>
        <sequence type="described" ref="VSP_038103"/>
    </isoform>
</comment>
<comment type="PTM">
    <text evidence="8 11 13">May be phosphorylated by CaMK1. Phosphorylated by the PKC kinases PKN1 and PKN2, impairing nuclear import. Phosphorylation at Ser-155 by MARK2, MARK3 and PRKD1 promotes interaction with 14-3-3 proteins and export from the nucleus. Phosphorylation at Ser-155 is a prerequisite for phosphorylation at Ser-181.</text>
</comment>
<comment type="similarity">
    <text evidence="21">Belongs to the histone deacetylase family. HD type 2 subfamily.</text>
</comment>
<comment type="sequence caution" evidence="21">
    <conflict type="frameshift">
        <sequence resource="EMBL-CDS" id="AAF63491"/>
    </conflict>
</comment>
<comment type="sequence caution" evidence="21">
    <conflict type="erroneous initiation">
        <sequence resource="EMBL-CDS" id="BAA91474"/>
    </conflict>
</comment>
<comment type="sequence caution" evidence="21">
    <conflict type="erroneous initiation">
        <sequence resource="EMBL-CDS" id="BAA91545"/>
    </conflict>
</comment>
<comment type="sequence caution" evidence="21">
    <conflict type="erroneous initiation">
        <sequence resource="EMBL-CDS" id="BAB15759"/>
    </conflict>
</comment>
<comment type="sequence caution" evidence="21">
    <conflict type="erroneous initiation">
        <sequence resource="EMBL-CDS" id="BAB55363"/>
    </conflict>
</comment>
<comment type="sequence caution" evidence="21">
    <conflict type="miscellaneous discrepancy">
        <sequence resource="EMBL-CDS" id="BAC56929"/>
    </conflict>
    <text>Intron retention.</text>
</comment>
<name>HDAC7_HUMAN</name>
<sequence length="952" mass="102927">MDLRVGQRPPVEPPPEPTLLALQRPQRLHHHLFLAGLQQQRSVEPMRLSMDTPMPELQVGPQEQELRQLLHKDKSKRSAVASSVVKQKLAEVILKKQQAALERTVHPNSPGIPYRTLEPLETEGATRSMLSSFLPPVPSLPSDPPEHFPLRKTVSEPNLKLRYKPKKSLERRKNPLLRKESAPPSLRRRPAETLGDSSPSSSSTPASGCSSPNDSEHGPNPILGSEALLGQRLRLQETSVAPFALPTVSLLPAITLGLPAPARADSDRRTHPTLGPRGPILGSPHTPLFLPHGLEPEAGGTLPSRLQPILLLDPSGSHAPLLTVPGLGPLPFHFAQSLMTTERLSGSGLHWPLSRTRSEPLPPSATAPPPPGPMQPRLEQLKTHVQVIKRSAKPSEKPRLRQIPSAEDLETDGGGPGQVVDDGLEHRELGHGQPEARGPAPLQQHPQVLLWEQQRLAGRLPRGSTGDTVLLPLAQGGHRPLSRAQSSPAAPASLSAPEPASQARVLSSSETPARTLPFTTGLIYDSVMLKHQCSCGDNSRHPEHAGRIQSIWSRLQERGLRSQCECLRGRKASLEELQSVHSERHVLLYGTNPLSRLKLDNGKLAGLLAQRMFVMLPCGGVGVDTDTIWNELHSSNAARWAAGSVTDLAFKVASRELKNGFAVVRPPGHHADHSTAMGFCFFNSVAIACRQLQQQSKASKILIVDWDVHHGNGTQQTFYQDPSVLYISLHRHDDGNFFPGSGAVDEVGAGSGEGFNVNVAWAGGLDPPMGDPEYLAAFRIVVMPIAREFSPDLVLVSAGFDAAEGHPAPLGGYHVSAKCFGYMTQQLMNLAGGAVVLALEGGHDLTAICDASEACVAALLGNRVDPLSEEGWKQKPNLNAIRSLEAVIRVHSKYWGCMQRLASCPDSWVPRVPGADKEEVEAVTALASLSVGILAEDRPSEQLVEEEEPMNL</sequence>
<organism>
    <name type="scientific">Homo sapiens</name>
    <name type="common">Human</name>
    <dbReference type="NCBI Taxonomy" id="9606"/>
    <lineage>
        <taxon>Eukaryota</taxon>
        <taxon>Metazoa</taxon>
        <taxon>Chordata</taxon>
        <taxon>Craniata</taxon>
        <taxon>Vertebrata</taxon>
        <taxon>Euteleostomi</taxon>
        <taxon>Mammalia</taxon>
        <taxon>Eutheria</taxon>
        <taxon>Euarchontoglires</taxon>
        <taxon>Primates</taxon>
        <taxon>Haplorrhini</taxon>
        <taxon>Catarrhini</taxon>
        <taxon>Hominidae</taxon>
        <taxon>Homo</taxon>
    </lineage>
</organism>
<evidence type="ECO:0000250" key="1">
    <source>
        <dbReference type="UniProtKB" id="Q8C2B3"/>
    </source>
</evidence>
<evidence type="ECO:0000256" key="2">
    <source>
        <dbReference type="SAM" id="MobiDB-lite"/>
    </source>
</evidence>
<evidence type="ECO:0000269" key="3">
    <source>
    </source>
</evidence>
<evidence type="ECO:0000269" key="4">
    <source>
    </source>
</evidence>
<evidence type="ECO:0000269" key="5">
    <source>
    </source>
</evidence>
<evidence type="ECO:0000269" key="6">
    <source>
    </source>
</evidence>
<evidence type="ECO:0000269" key="7">
    <source>
    </source>
</evidence>
<evidence type="ECO:0000269" key="8">
    <source>
    </source>
</evidence>
<evidence type="ECO:0000269" key="9">
    <source>
    </source>
</evidence>
<evidence type="ECO:0000269" key="10">
    <source>
    </source>
</evidence>
<evidence type="ECO:0000269" key="11">
    <source>
    </source>
</evidence>
<evidence type="ECO:0000269" key="12">
    <source>
    </source>
</evidence>
<evidence type="ECO:0000269" key="13">
    <source>
    </source>
</evidence>
<evidence type="ECO:0000269" key="14">
    <source>
    </source>
</evidence>
<evidence type="ECO:0000269" key="15">
    <source>
    </source>
</evidence>
<evidence type="ECO:0000269" key="16">
    <source>
    </source>
</evidence>
<evidence type="ECO:0000303" key="17">
    <source>
    </source>
</evidence>
<evidence type="ECO:0000303" key="18">
    <source>
    </source>
</evidence>
<evidence type="ECO:0000303" key="19">
    <source ref="3"/>
</evidence>
<evidence type="ECO:0000303" key="20">
    <source ref="4"/>
</evidence>
<evidence type="ECO:0000305" key="21"/>
<evidence type="ECO:0000305" key="22">
    <source>
    </source>
</evidence>
<evidence type="ECO:0007744" key="23">
    <source>
    </source>
</evidence>
<evidence type="ECO:0007744" key="24">
    <source>
    </source>
</evidence>
<evidence type="ECO:0007744" key="25">
    <source>
    </source>
</evidence>
<evidence type="ECO:0007744" key="26">
    <source>
    </source>
</evidence>
<evidence type="ECO:0007744" key="27">
    <source>
    </source>
</evidence>
<evidence type="ECO:0007744" key="28">
    <source>
    </source>
</evidence>
<evidence type="ECO:0007829" key="29">
    <source>
        <dbReference type="PDB" id="3C10"/>
    </source>
</evidence>
<reference key="1">
    <citation type="submission" date="2000-02" db="EMBL/GenBank/DDBJ databases">
        <title>A novel class II HDAC is associated with the transcriptional homeodomain repressor CCAAT displacement protein.</title>
        <authorList>
            <person name="Li S."/>
            <person name="Fischle W."/>
            <person name="Verdin E."/>
            <person name="Walsh M.J."/>
        </authorList>
    </citation>
    <scope>NUCLEOTIDE SEQUENCE [MRNA] (ISOFORM 1)</scope>
    <source>
        <tissue>Cervix carcinoma</tissue>
    </source>
</reference>
<reference key="2">
    <citation type="submission" date="2003-05" db="EMBL/GenBank/DDBJ databases">
        <title>Genomic organization of the human histone deacetylase 7 gene.</title>
        <authorList>
            <person name="Petrie K."/>
            <person name="Zelent A."/>
        </authorList>
    </citation>
    <scope>NUCLEOTIDE SEQUENCE [GENOMIC DNA]</scope>
    <scope>ALTERNATIVE SPLICING (ISOFORM 5)</scope>
</reference>
<reference key="3">
    <citation type="submission" date="2003-06" db="EMBL/GenBank/DDBJ databases">
        <title>Homo sapiens histone deacetylase 7A (HDAC7A), transcript variant 3.</title>
        <authorList>
            <person name="Zhi Y."/>
            <person name="Su E.W."/>
        </authorList>
    </citation>
    <scope>NUCLEOTIDE SEQUENCE [MRNA] (ISOFORM 3)</scope>
</reference>
<reference key="4">
    <citation type="submission" date="2003-08" db="EMBL/GenBank/DDBJ databases">
        <title>Cloning of human full-length CDSs in BD Creator(TM) system donor vector.</title>
        <authorList>
            <person name="Kalnine N."/>
            <person name="Chen X."/>
            <person name="Rolfs A."/>
            <person name="Halleck A."/>
            <person name="Hines L."/>
            <person name="Eisenstein S."/>
            <person name="Koundinya M."/>
            <person name="Raphael J."/>
            <person name="Moreira D."/>
            <person name="Kelley T."/>
            <person name="LaBaer J."/>
            <person name="Lin Y."/>
            <person name="Phelan M."/>
            <person name="Farmer A."/>
        </authorList>
    </citation>
    <scope>NUCLEOTIDE SEQUENCE [LARGE SCALE MRNA] (ISOFORM 10)</scope>
</reference>
<reference key="5">
    <citation type="journal article" date="2004" name="Nat. Genet.">
        <title>Complete sequencing and characterization of 21,243 full-length human cDNAs.</title>
        <authorList>
            <person name="Ota T."/>
            <person name="Suzuki Y."/>
            <person name="Nishikawa T."/>
            <person name="Otsuki T."/>
            <person name="Sugiyama T."/>
            <person name="Irie R."/>
            <person name="Wakamatsu A."/>
            <person name="Hayashi K."/>
            <person name="Sato H."/>
            <person name="Nagai K."/>
            <person name="Kimura K."/>
            <person name="Makita H."/>
            <person name="Sekine M."/>
            <person name="Obayashi M."/>
            <person name="Nishi T."/>
            <person name="Shibahara T."/>
            <person name="Tanaka T."/>
            <person name="Ishii S."/>
            <person name="Yamamoto J."/>
            <person name="Saito K."/>
            <person name="Kawai Y."/>
            <person name="Isono Y."/>
            <person name="Nakamura Y."/>
            <person name="Nagahari K."/>
            <person name="Murakami K."/>
            <person name="Yasuda T."/>
            <person name="Iwayanagi T."/>
            <person name="Wagatsuma M."/>
            <person name="Shiratori A."/>
            <person name="Sudo H."/>
            <person name="Hosoiri T."/>
            <person name="Kaku Y."/>
            <person name="Kodaira H."/>
            <person name="Kondo H."/>
            <person name="Sugawara M."/>
            <person name="Takahashi M."/>
            <person name="Kanda K."/>
            <person name="Yokoi T."/>
            <person name="Furuya T."/>
            <person name="Kikkawa E."/>
            <person name="Omura Y."/>
            <person name="Abe K."/>
            <person name="Kamihara K."/>
            <person name="Katsuta N."/>
            <person name="Sato K."/>
            <person name="Tanikawa M."/>
            <person name="Yamazaki M."/>
            <person name="Ninomiya K."/>
            <person name="Ishibashi T."/>
            <person name="Yamashita H."/>
            <person name="Murakawa K."/>
            <person name="Fujimori K."/>
            <person name="Tanai H."/>
            <person name="Kimata M."/>
            <person name="Watanabe M."/>
            <person name="Hiraoka S."/>
            <person name="Chiba Y."/>
            <person name="Ishida S."/>
            <person name="Ono Y."/>
            <person name="Takiguchi S."/>
            <person name="Watanabe S."/>
            <person name="Yosida M."/>
            <person name="Hotuta T."/>
            <person name="Kusano J."/>
            <person name="Kanehori K."/>
            <person name="Takahashi-Fujii A."/>
            <person name="Hara H."/>
            <person name="Tanase T.-O."/>
            <person name="Nomura Y."/>
            <person name="Togiya S."/>
            <person name="Komai F."/>
            <person name="Hara R."/>
            <person name="Takeuchi K."/>
            <person name="Arita M."/>
            <person name="Imose N."/>
            <person name="Musashino K."/>
            <person name="Yuuki H."/>
            <person name="Oshima A."/>
            <person name="Sasaki N."/>
            <person name="Aotsuka S."/>
            <person name="Yoshikawa Y."/>
            <person name="Matsunawa H."/>
            <person name="Ichihara T."/>
            <person name="Shiohata N."/>
            <person name="Sano S."/>
            <person name="Moriya S."/>
            <person name="Momiyama H."/>
            <person name="Satoh N."/>
            <person name="Takami S."/>
            <person name="Terashima Y."/>
            <person name="Suzuki O."/>
            <person name="Nakagawa S."/>
            <person name="Senoh A."/>
            <person name="Mizoguchi H."/>
            <person name="Goto Y."/>
            <person name="Shimizu F."/>
            <person name="Wakebe H."/>
            <person name="Hishigaki H."/>
            <person name="Watanabe T."/>
            <person name="Sugiyama A."/>
            <person name="Takemoto M."/>
            <person name="Kawakami B."/>
            <person name="Yamazaki M."/>
            <person name="Watanabe K."/>
            <person name="Kumagai A."/>
            <person name="Itakura S."/>
            <person name="Fukuzumi Y."/>
            <person name="Fujimori Y."/>
            <person name="Komiyama M."/>
            <person name="Tashiro H."/>
            <person name="Tanigami A."/>
            <person name="Fujiwara T."/>
            <person name="Ono T."/>
            <person name="Yamada K."/>
            <person name="Fujii Y."/>
            <person name="Ozaki K."/>
            <person name="Hirao M."/>
            <person name="Ohmori Y."/>
            <person name="Kawabata A."/>
            <person name="Hikiji T."/>
            <person name="Kobatake N."/>
            <person name="Inagaki H."/>
            <person name="Ikema Y."/>
            <person name="Okamoto S."/>
            <person name="Okitani R."/>
            <person name="Kawakami T."/>
            <person name="Noguchi S."/>
            <person name="Itoh T."/>
            <person name="Shigeta K."/>
            <person name="Senba T."/>
            <person name="Matsumura K."/>
            <person name="Nakajima Y."/>
            <person name="Mizuno T."/>
            <person name="Morinaga M."/>
            <person name="Sasaki M."/>
            <person name="Togashi T."/>
            <person name="Oyama M."/>
            <person name="Hata H."/>
            <person name="Watanabe M."/>
            <person name="Komatsu T."/>
            <person name="Mizushima-Sugano J."/>
            <person name="Satoh T."/>
            <person name="Shirai Y."/>
            <person name="Takahashi Y."/>
            <person name="Nakagawa K."/>
            <person name="Okumura K."/>
            <person name="Nagase T."/>
            <person name="Nomura N."/>
            <person name="Kikuchi H."/>
            <person name="Masuho Y."/>
            <person name="Yamashita R."/>
            <person name="Nakai K."/>
            <person name="Yada T."/>
            <person name="Nakamura Y."/>
            <person name="Ohara O."/>
            <person name="Isogai T."/>
            <person name="Sugano S."/>
        </authorList>
    </citation>
    <scope>NUCLEOTIDE SEQUENCE [LARGE SCALE MRNA] (ISOFORMS 2; 5; 6; 8 AND 9)</scope>
    <scope>NUCLEOTIDE SEQUENCE [LARGE SCALE MRNA] OF 220-952 (ISOFORM 3)</scope>
    <scope>NUCLEOTIDE SEQUENCE [LARGE SCALE MRNA] OF 651-952</scope>
    <source>
        <tissue>Embryo</tissue>
        <tissue>Mammary gland</tissue>
        <tissue>Placenta</tissue>
        <tissue>Spleen</tissue>
        <tissue>Teratocarcinoma</tissue>
        <tissue>Thymus</tissue>
    </source>
</reference>
<reference key="6">
    <citation type="journal article" date="2006" name="Nature">
        <title>The finished DNA sequence of human chromosome 12.</title>
        <authorList>
            <person name="Scherer S.E."/>
            <person name="Muzny D.M."/>
            <person name="Buhay C.J."/>
            <person name="Chen R."/>
            <person name="Cree A."/>
            <person name="Ding Y."/>
            <person name="Dugan-Rocha S."/>
            <person name="Gill R."/>
            <person name="Gunaratne P."/>
            <person name="Harris R.A."/>
            <person name="Hawes A.C."/>
            <person name="Hernandez J."/>
            <person name="Hodgson A.V."/>
            <person name="Hume J."/>
            <person name="Jackson A."/>
            <person name="Khan Z.M."/>
            <person name="Kovar-Smith C."/>
            <person name="Lewis L.R."/>
            <person name="Lozado R.J."/>
            <person name="Metzker M.L."/>
            <person name="Milosavljevic A."/>
            <person name="Miner G.R."/>
            <person name="Montgomery K.T."/>
            <person name="Morgan M.B."/>
            <person name="Nazareth L.V."/>
            <person name="Scott G."/>
            <person name="Sodergren E."/>
            <person name="Song X.-Z."/>
            <person name="Steffen D."/>
            <person name="Lovering R.C."/>
            <person name="Wheeler D.A."/>
            <person name="Worley K.C."/>
            <person name="Yuan Y."/>
            <person name="Zhang Z."/>
            <person name="Adams C.Q."/>
            <person name="Ansari-Lari M.A."/>
            <person name="Ayele M."/>
            <person name="Brown M.J."/>
            <person name="Chen G."/>
            <person name="Chen Z."/>
            <person name="Clerc-Blankenburg K.P."/>
            <person name="Davis C."/>
            <person name="Delgado O."/>
            <person name="Dinh H.H."/>
            <person name="Draper H."/>
            <person name="Gonzalez-Garay M.L."/>
            <person name="Havlak P."/>
            <person name="Jackson L.R."/>
            <person name="Jacob L.S."/>
            <person name="Kelly S.H."/>
            <person name="Li L."/>
            <person name="Li Z."/>
            <person name="Liu J."/>
            <person name="Liu W."/>
            <person name="Lu J."/>
            <person name="Maheshwari M."/>
            <person name="Nguyen B.-V."/>
            <person name="Okwuonu G.O."/>
            <person name="Pasternak S."/>
            <person name="Perez L.M."/>
            <person name="Plopper F.J.H."/>
            <person name="Santibanez J."/>
            <person name="Shen H."/>
            <person name="Tabor P.E."/>
            <person name="Verduzco D."/>
            <person name="Waldron L."/>
            <person name="Wang Q."/>
            <person name="Williams G.A."/>
            <person name="Zhang J."/>
            <person name="Zhou J."/>
            <person name="Allen C.C."/>
            <person name="Amin A.G."/>
            <person name="Anyalebechi V."/>
            <person name="Bailey M."/>
            <person name="Barbaria J.A."/>
            <person name="Bimage K.E."/>
            <person name="Bryant N.P."/>
            <person name="Burch P.E."/>
            <person name="Burkett C.E."/>
            <person name="Burrell K.L."/>
            <person name="Calderon E."/>
            <person name="Cardenas V."/>
            <person name="Carter K."/>
            <person name="Casias K."/>
            <person name="Cavazos I."/>
            <person name="Cavazos S.R."/>
            <person name="Ceasar H."/>
            <person name="Chacko J."/>
            <person name="Chan S.N."/>
            <person name="Chavez D."/>
            <person name="Christopoulos C."/>
            <person name="Chu J."/>
            <person name="Cockrell R."/>
            <person name="Cox C.D."/>
            <person name="Dang M."/>
            <person name="Dathorne S.R."/>
            <person name="David R."/>
            <person name="Davis C.M."/>
            <person name="Davy-Carroll L."/>
            <person name="Deshazo D.R."/>
            <person name="Donlin J.E."/>
            <person name="D'Souza L."/>
            <person name="Eaves K.A."/>
            <person name="Egan A."/>
            <person name="Emery-Cohen A.J."/>
            <person name="Escotto M."/>
            <person name="Flagg N."/>
            <person name="Forbes L.D."/>
            <person name="Gabisi A.M."/>
            <person name="Garza M."/>
            <person name="Hamilton C."/>
            <person name="Henderson N."/>
            <person name="Hernandez O."/>
            <person name="Hines S."/>
            <person name="Hogues M.E."/>
            <person name="Huang M."/>
            <person name="Idlebird D.G."/>
            <person name="Johnson R."/>
            <person name="Jolivet A."/>
            <person name="Jones S."/>
            <person name="Kagan R."/>
            <person name="King L.M."/>
            <person name="Leal B."/>
            <person name="Lebow H."/>
            <person name="Lee S."/>
            <person name="LeVan J.M."/>
            <person name="Lewis L.C."/>
            <person name="London P."/>
            <person name="Lorensuhewa L.M."/>
            <person name="Loulseged H."/>
            <person name="Lovett D.A."/>
            <person name="Lucier A."/>
            <person name="Lucier R.L."/>
            <person name="Ma J."/>
            <person name="Madu R.C."/>
            <person name="Mapua P."/>
            <person name="Martindale A.D."/>
            <person name="Martinez E."/>
            <person name="Massey E."/>
            <person name="Mawhiney S."/>
            <person name="Meador M.G."/>
            <person name="Mendez S."/>
            <person name="Mercado C."/>
            <person name="Mercado I.C."/>
            <person name="Merritt C.E."/>
            <person name="Miner Z.L."/>
            <person name="Minja E."/>
            <person name="Mitchell T."/>
            <person name="Mohabbat F."/>
            <person name="Mohabbat K."/>
            <person name="Montgomery B."/>
            <person name="Moore N."/>
            <person name="Morris S."/>
            <person name="Munidasa M."/>
            <person name="Ngo R.N."/>
            <person name="Nguyen N.B."/>
            <person name="Nickerson E."/>
            <person name="Nwaokelemeh O.O."/>
            <person name="Nwokenkwo S."/>
            <person name="Obregon M."/>
            <person name="Oguh M."/>
            <person name="Oragunye N."/>
            <person name="Oviedo R.J."/>
            <person name="Parish B.J."/>
            <person name="Parker D.N."/>
            <person name="Parrish J."/>
            <person name="Parks K.L."/>
            <person name="Paul H.A."/>
            <person name="Payton B.A."/>
            <person name="Perez A."/>
            <person name="Perrin W."/>
            <person name="Pickens A."/>
            <person name="Primus E.L."/>
            <person name="Pu L.-L."/>
            <person name="Puazo M."/>
            <person name="Quiles M.M."/>
            <person name="Quiroz J.B."/>
            <person name="Rabata D."/>
            <person name="Reeves K."/>
            <person name="Ruiz S.J."/>
            <person name="Shao H."/>
            <person name="Sisson I."/>
            <person name="Sonaike T."/>
            <person name="Sorelle R.P."/>
            <person name="Sutton A.E."/>
            <person name="Svatek A.F."/>
            <person name="Svetz L.A."/>
            <person name="Tamerisa K.S."/>
            <person name="Taylor T.R."/>
            <person name="Teague B."/>
            <person name="Thomas N."/>
            <person name="Thorn R.D."/>
            <person name="Trejos Z.Y."/>
            <person name="Trevino B.K."/>
            <person name="Ukegbu O.N."/>
            <person name="Urban J.B."/>
            <person name="Vasquez L.I."/>
            <person name="Vera V.A."/>
            <person name="Villasana D.M."/>
            <person name="Wang L."/>
            <person name="Ward-Moore S."/>
            <person name="Warren J.T."/>
            <person name="Wei X."/>
            <person name="White F."/>
            <person name="Williamson A.L."/>
            <person name="Wleczyk R."/>
            <person name="Wooden H.S."/>
            <person name="Wooden S.H."/>
            <person name="Yen J."/>
            <person name="Yoon L."/>
            <person name="Yoon V."/>
            <person name="Zorrilla S.E."/>
            <person name="Nelson D."/>
            <person name="Kucherlapati R."/>
            <person name="Weinstock G."/>
            <person name="Gibbs R.A."/>
        </authorList>
    </citation>
    <scope>NUCLEOTIDE SEQUENCE [LARGE SCALE GENOMIC DNA]</scope>
</reference>
<reference key="7">
    <citation type="submission" date="2005-07" db="EMBL/GenBank/DDBJ databases">
        <authorList>
            <person name="Mural R.J."/>
            <person name="Istrail S."/>
            <person name="Sutton G.G."/>
            <person name="Florea L."/>
            <person name="Halpern A.L."/>
            <person name="Mobarry C.M."/>
            <person name="Lippert R."/>
            <person name="Walenz B."/>
            <person name="Shatkay H."/>
            <person name="Dew I."/>
            <person name="Miller J.R."/>
            <person name="Flanigan M.J."/>
            <person name="Edwards N.J."/>
            <person name="Bolanos R."/>
            <person name="Fasulo D."/>
            <person name="Halldorsson B.V."/>
            <person name="Hannenhalli S."/>
            <person name="Turner R."/>
            <person name="Yooseph S."/>
            <person name="Lu F."/>
            <person name="Nusskern D.R."/>
            <person name="Shue B.C."/>
            <person name="Zheng X.H."/>
            <person name="Zhong F."/>
            <person name="Delcher A.L."/>
            <person name="Huson D.H."/>
            <person name="Kravitz S.A."/>
            <person name="Mouchard L."/>
            <person name="Reinert K."/>
            <person name="Remington K.A."/>
            <person name="Clark A.G."/>
            <person name="Waterman M.S."/>
            <person name="Eichler E.E."/>
            <person name="Adams M.D."/>
            <person name="Hunkapiller M.W."/>
            <person name="Myers E.W."/>
            <person name="Venter J.C."/>
        </authorList>
    </citation>
    <scope>NUCLEOTIDE SEQUENCE [LARGE SCALE GENOMIC DNA]</scope>
</reference>
<reference key="8">
    <citation type="journal article" date="2004" name="Genome Res.">
        <title>The status, quality, and expansion of the NIH full-length cDNA project: the Mammalian Gene Collection (MGC).</title>
        <authorList>
            <consortium name="The MGC Project Team"/>
        </authorList>
    </citation>
    <scope>NUCLEOTIDE SEQUENCE [LARGE SCALE MRNA] (ISOFORM 7)</scope>
    <scope>NUCLEOTIDE SEQUENCE [LARGE SCALE MRNA] OF 242-952 (ISOFORM 1)</scope>
    <source>
        <tissue>B-cell</tissue>
        <tissue>Colon</tissue>
        <tissue>PNS</tissue>
    </source>
</reference>
<reference key="9">
    <citation type="journal article" date="2007" name="BMC Genomics">
        <title>The full-ORF clone resource of the German cDNA consortium.</title>
        <authorList>
            <person name="Bechtel S."/>
            <person name="Rosenfelder H."/>
            <person name="Duda A."/>
            <person name="Schmidt C.P."/>
            <person name="Ernst U."/>
            <person name="Wellenreuther R."/>
            <person name="Mehrle A."/>
            <person name="Schuster C."/>
            <person name="Bahr A."/>
            <person name="Bloecker H."/>
            <person name="Heubner D."/>
            <person name="Hoerlein A."/>
            <person name="Michel G."/>
            <person name="Wedler H."/>
            <person name="Koehrer K."/>
            <person name="Ottenwaelder B."/>
            <person name="Poustka A."/>
            <person name="Wiemann S."/>
            <person name="Schupp I."/>
        </authorList>
    </citation>
    <scope>NUCLEOTIDE SEQUENCE [LARGE SCALE MRNA] OF 75-952 (ISOFORM 1)</scope>
    <source>
        <tissue>Uterus</tissue>
    </source>
</reference>
<reference key="10">
    <citation type="journal article" date="2001" name="J. Biol. Chem.">
        <title>Tip60 and HDAC7 interact with the endothelin receptor a and may be involved in downstream signaling.</title>
        <authorList>
            <person name="Lee H.-J."/>
            <person name="Chun M."/>
            <person name="Kandror K.V."/>
        </authorList>
    </citation>
    <scope>SUBCELLULAR LOCATION</scope>
    <scope>INTERACTION WITH EDNRA</scope>
</reference>
<reference key="11">
    <citation type="journal article" date="2001" name="J. Biol. Chem.">
        <title>Human HDAC7 histone deacetylase activity is associated with HDAC3 in vivo.</title>
        <authorList>
            <person name="Fischle W."/>
            <person name="Dequiedt F."/>
            <person name="Fillion M."/>
            <person name="Hendzel M.J."/>
            <person name="Voelter W."/>
            <person name="Verdin E."/>
        </authorList>
    </citation>
    <scope>INTERACTION WITH HDAC3</scope>
</reference>
<reference key="12">
    <citation type="journal article" date="2002" name="J. Virol.">
        <title>Signal transduction and transcription factor modification during reactivation of Epstein-Barr virus from latency.</title>
        <authorList>
            <person name="Bryant H."/>
            <person name="Farrell P.J."/>
        </authorList>
    </citation>
    <scope>FUNCTION</scope>
</reference>
<reference key="13">
    <citation type="journal article" date="2003" name="J. Biol. Chem.">
        <title>Tip60 is a co-repressor for STAT3.</title>
        <authorList>
            <person name="Xiao H."/>
            <person name="Chung J."/>
            <person name="Kao H.-Y."/>
            <person name="Yang Y.-C."/>
        </authorList>
    </citation>
    <scope>INTERACTION WITH KAT5</scope>
</reference>
<reference key="14">
    <citation type="journal article" date="2006" name="Mol. Cell. Biol.">
        <title>New role for hPar-1 kinases EMK and C-TAK1 in regulating localization and activity of class IIa histone deacetylases.</title>
        <authorList>
            <person name="Dequiedt F."/>
            <person name="Martin M."/>
            <person name="Von Blume J."/>
            <person name="Vertommen D."/>
            <person name="Lecomte E."/>
            <person name="Mari N."/>
            <person name="Heinen M.F."/>
            <person name="Bachmann M."/>
            <person name="Twizere J.C."/>
            <person name="Huang M.C."/>
            <person name="Rider M.H."/>
            <person name="Piwnica-Worms H."/>
            <person name="Seufferlein T."/>
            <person name="Kettmann R."/>
        </authorList>
    </citation>
    <scope>SUBCELLULAR LOCATION</scope>
    <scope>PHOSPHORYLATION AT SER-155 AND SER-181</scope>
    <scope>MUTAGENESIS OF LEU-150; SER-155; SER-181; SER-358 AND SER-486</scope>
</reference>
<reference key="15">
    <citation type="journal article" date="2007" name="EMBO J.">
        <title>Phosphorylation at Ser244 by CK1 determines nuclear localization and substrate targeting of PKD2.</title>
        <authorList>
            <person name="von Blume J."/>
            <person name="Knippschild U."/>
            <person name="Dequiedt F."/>
            <person name="Giamas G."/>
            <person name="Beck A."/>
            <person name="Auer A."/>
            <person name="Van Lint J."/>
            <person name="Adler G."/>
            <person name="Seufferlein T."/>
        </authorList>
    </citation>
    <scope>PHOSPHORYLATION AT SER-181</scope>
</reference>
<reference key="16">
    <citation type="journal article" date="2007" name="Int. J. Cancer">
        <title>Breast cancer associated transcriptional repressor PLU-1/JARID1B interacts directly with histone deacetylases.</title>
        <authorList>
            <person name="Barrett A."/>
            <person name="Santangelo S."/>
            <person name="Tan K."/>
            <person name="Catchpole S."/>
            <person name="Roberts K."/>
            <person name="Spencer-Dene B."/>
            <person name="Hall D."/>
            <person name="Scibetta A."/>
            <person name="Burchell J."/>
            <person name="Verdin E."/>
            <person name="Freemont P."/>
            <person name="Taylor-Papadimitriou J."/>
        </authorList>
    </citation>
    <scope>INTERACTION WITH KDM5B</scope>
</reference>
<reference key="17">
    <citation type="journal article" date="2007" name="Proc. Natl. Acad. Sci. U.S.A.">
        <title>FOXP3 interactions with histone acetyltransferase and class II histone deacetylases are required for repression.</title>
        <authorList>
            <person name="Li B."/>
            <person name="Samanta A."/>
            <person name="Song X."/>
            <person name="Iacono K.T."/>
            <person name="Bembas K."/>
            <person name="Tao R."/>
            <person name="Basu S."/>
            <person name="Riley J.L."/>
            <person name="Hancock W.W."/>
            <person name="Shen Y."/>
            <person name="Saouaf S.J."/>
            <person name="Greene M.I."/>
        </authorList>
    </citation>
    <scope>FUNCTION</scope>
    <scope>INTERACTION WITH FOXP3</scope>
</reference>
<reference key="18">
    <citation type="journal article" date="2008" name="Proc. Natl. Acad. Sci. U.S.A.">
        <title>A quantitative atlas of mitotic phosphorylation.</title>
        <authorList>
            <person name="Dephoure N."/>
            <person name="Zhou C."/>
            <person name="Villen J."/>
            <person name="Beausoleil S.A."/>
            <person name="Bakalarski C.E."/>
            <person name="Elledge S.J."/>
            <person name="Gygi S.P."/>
        </authorList>
    </citation>
    <scope>PHOSPHORYLATION [LARGE SCALE ANALYSIS] AT SER-109; SER-283; THR-286 AND SER-486</scope>
    <scope>IDENTIFICATION BY MASS SPECTROMETRY [LARGE SCALE ANALYSIS]</scope>
    <source>
        <tissue>Cervix carcinoma</tissue>
    </source>
</reference>
<reference key="19">
    <citation type="journal article" date="2009" name="Anal. Chem.">
        <title>Lys-N and trypsin cover complementary parts of the phosphoproteome in a refined SCX-based approach.</title>
        <authorList>
            <person name="Gauci S."/>
            <person name="Helbig A.O."/>
            <person name="Slijper M."/>
            <person name="Krijgsveld J."/>
            <person name="Heck A.J."/>
            <person name="Mohammed S."/>
        </authorList>
    </citation>
    <scope>IDENTIFICATION BY MASS SPECTROMETRY [LARGE SCALE ANALYSIS]</scope>
</reference>
<reference key="20">
    <citation type="journal article" date="2009" name="Sci. Signal.">
        <title>Quantitative phosphoproteomic analysis of T cell receptor signaling reveals system-wide modulation of protein-protein interactions.</title>
        <authorList>
            <person name="Mayya V."/>
            <person name="Lundgren D.H."/>
            <person name="Hwang S.-I."/>
            <person name="Rezaul K."/>
            <person name="Wu L."/>
            <person name="Eng J.K."/>
            <person name="Rodionov V."/>
            <person name="Han D.K."/>
        </authorList>
    </citation>
    <scope>PHOSPHORYLATION [LARGE SCALE ANALYSIS] AT SER-486</scope>
    <scope>IDENTIFICATION BY MASS SPECTROMETRY [LARGE SCALE ANALYSIS]</scope>
    <source>
        <tissue>Leukemic T-cell</tissue>
    </source>
</reference>
<reference key="21">
    <citation type="journal article" date="2010" name="FEBS Lett.">
        <title>Protein kinase C-related kinase targets nuclear localization signals in a subset of class IIa histone deacetylases.</title>
        <authorList>
            <person name="Harrison B.C."/>
            <person name="Huynh K."/>
            <person name="Lundgaard G.L."/>
            <person name="Helmke S.M."/>
            <person name="Perryman M.B."/>
            <person name="McKinsey T.A."/>
        </authorList>
    </citation>
    <scope>PHOSPHORYLATION</scope>
</reference>
<reference key="22">
    <citation type="journal article" date="2010" name="Sci. Signal.">
        <title>Quantitative phosphoproteomics reveals widespread full phosphorylation site occupancy during mitosis.</title>
        <authorList>
            <person name="Olsen J.V."/>
            <person name="Vermeulen M."/>
            <person name="Santamaria A."/>
            <person name="Kumar C."/>
            <person name="Miller M.L."/>
            <person name="Jensen L.J."/>
            <person name="Gnad F."/>
            <person name="Cox J."/>
            <person name="Jensen T.S."/>
            <person name="Nigg E.A."/>
            <person name="Brunak S."/>
            <person name="Mann M."/>
        </authorList>
    </citation>
    <scope>PHOSPHORYLATION [LARGE SCALE ANALYSIS] AT SER-181; SER-283 AND THR-286</scope>
    <scope>IDENTIFICATION BY MASS SPECTROMETRY [LARGE SCALE ANALYSIS]</scope>
    <source>
        <tissue>Cervix carcinoma</tissue>
    </source>
</reference>
<reference key="23">
    <citation type="journal article" date="2011" name="Sci. Signal.">
        <title>System-wide temporal characterization of the proteome and phosphoproteome of human embryonic stem cell differentiation.</title>
        <authorList>
            <person name="Rigbolt K.T."/>
            <person name="Prokhorova T.A."/>
            <person name="Akimov V."/>
            <person name="Henningsen J."/>
            <person name="Johansen P.T."/>
            <person name="Kratchmarova I."/>
            <person name="Kassem M."/>
            <person name="Mann M."/>
            <person name="Olsen J.V."/>
            <person name="Blagoev B."/>
        </authorList>
    </citation>
    <scope>PHOSPHORYLATION [LARGE SCALE ANALYSIS] AT SER-181 AND SER-486</scope>
    <scope>IDENTIFICATION BY MASS SPECTROMETRY [LARGE SCALE ANALYSIS]</scope>
</reference>
<reference key="24">
    <citation type="journal article" date="2012" name="Gastroenterology">
        <title>Beta-catenin inhibits promyelocytic leukemia protein tumor suppressor function in colorectal cancer cells.</title>
        <authorList>
            <person name="Satow R."/>
            <person name="Shitashige M."/>
            <person name="Jigami T."/>
            <person name="Fukami K."/>
            <person name="Honda K."/>
            <person name="Kitabayashi I."/>
            <person name="Yamada T."/>
        </authorList>
    </citation>
    <scope>INTERACTION WITH PML</scope>
</reference>
<reference key="25">
    <citation type="journal article" date="2013" name="J. Proteome Res.">
        <title>Toward a comprehensive characterization of a human cancer cell phosphoproteome.</title>
        <authorList>
            <person name="Zhou H."/>
            <person name="Di Palma S."/>
            <person name="Preisinger C."/>
            <person name="Peng M."/>
            <person name="Polat A.N."/>
            <person name="Heck A.J."/>
            <person name="Mohammed S."/>
        </authorList>
    </citation>
    <scope>PHOSPHORYLATION [LARGE SCALE ANALYSIS] AT SER-109; SER-181; SER-405; SER-486; SER-487; SER-507 AND SER-595</scope>
    <scope>IDENTIFICATION BY MASS SPECTROMETRY [LARGE SCALE ANALYSIS]</scope>
    <source>
        <tissue>Cervix carcinoma</tissue>
        <tissue>Erythroleukemia</tissue>
    </source>
</reference>
<reference key="26">
    <citation type="journal article" date="2014" name="J. Proteomics">
        <title>An enzyme assisted RP-RPLC approach for in-depth analysis of human liver phosphoproteome.</title>
        <authorList>
            <person name="Bian Y."/>
            <person name="Song C."/>
            <person name="Cheng K."/>
            <person name="Dong M."/>
            <person name="Wang F."/>
            <person name="Huang J."/>
            <person name="Sun D."/>
            <person name="Wang L."/>
            <person name="Ye M."/>
            <person name="Zou H."/>
        </authorList>
    </citation>
    <scope>PHOSPHORYLATION [LARGE SCALE ANALYSIS] AT SER-364 AND SER-486</scope>
    <scope>IDENTIFICATION BY MASS SPECTROMETRY [LARGE SCALE ANALYSIS]</scope>
    <source>
        <tissue>Liver</tissue>
    </source>
</reference>
<reference key="27">
    <citation type="journal article" date="2017" name="Proc. Natl. Acad. Sci. U.S.A.">
        <title>MicroRNA-10a is crucial for endothelial response to different flow patterns via interaction of retinoid acid receptors and histone deacetylases.</title>
        <authorList>
            <person name="Lee D.Y."/>
            <person name="Lin T.E."/>
            <person name="Lee C.I."/>
            <person name="Zhou J."/>
            <person name="Huang Y.H."/>
            <person name="Lee P.L."/>
            <person name="Shih Y.T."/>
            <person name="Chien S."/>
            <person name="Chiu J.J."/>
        </authorList>
    </citation>
    <scope>FUNCTION</scope>
    <scope>INTERACTION WITH RARA</scope>
</reference>
<reference key="28">
    <citation type="journal article" date="2023" name="Nat. Commun.">
        <title>K235 acetylation couples with PSPC1 to regulate the m6A demethylation activity of ALKBH5 and tumorigenesis.</title>
        <authorList>
            <person name="Zhang X.L."/>
            <person name="Chen X.H."/>
            <person name="Xu B."/>
            <person name="Chen M."/>
            <person name="Zhu S."/>
            <person name="Meng N."/>
            <person name="Wang J.Z."/>
            <person name="Zhu H."/>
            <person name="Chen D."/>
            <person name="Liu J.B."/>
            <person name="Yan G.R."/>
        </authorList>
    </citation>
    <scope>FUNCTION</scope>
    <scope>CATALYTIC ACTIVITY</scope>
</reference>
<reference key="29">
    <citation type="journal article" date="2008" name="J. Biol. Chem.">
        <title>Human HDAC7 harbors a class IIa histone deacetylase-specific zinc binding motif and cryptic deacetylase activity.</title>
        <authorList>
            <person name="Schuetz A."/>
            <person name="Min J."/>
            <person name="Allali-Hassani A."/>
            <person name="Schapira M."/>
            <person name="Shuen M."/>
            <person name="Loppnau P."/>
            <person name="Mazitschek R."/>
            <person name="Kwiatkowski N.P."/>
            <person name="Lewis T.A."/>
            <person name="Maglathin R.L."/>
            <person name="McLean T.H."/>
            <person name="Bochkarev A."/>
            <person name="Plotnikov A.N."/>
            <person name="Vedadi M."/>
            <person name="Arrowsmith C.H."/>
        </authorList>
    </citation>
    <scope>X-RAY CRYSTALLOGRAPHY (2.0 ANGSTROMS) OF 482-903</scope>
    <scope>ZINC-BINDING SITES</scope>
    <scope>MUTAGENESIS OF HIS-843</scope>
</reference>
<reference key="30">
    <citation type="journal article" date="2006" name="Science">
        <title>The consensus coding sequences of human breast and colorectal cancers.</title>
        <authorList>
            <person name="Sjoeblom T."/>
            <person name="Jones S."/>
            <person name="Wood L.D."/>
            <person name="Parsons D.W."/>
            <person name="Lin J."/>
            <person name="Barber T.D."/>
            <person name="Mandelker D."/>
            <person name="Leary R.J."/>
            <person name="Ptak J."/>
            <person name="Silliman N."/>
            <person name="Szabo S."/>
            <person name="Buckhaults P."/>
            <person name="Farrell C."/>
            <person name="Meeh P."/>
            <person name="Markowitz S.D."/>
            <person name="Willis J."/>
            <person name="Dawson D."/>
            <person name="Willson J.K.V."/>
            <person name="Gazdar A.F."/>
            <person name="Hartigan J."/>
            <person name="Wu L."/>
            <person name="Liu C."/>
            <person name="Parmigiani G."/>
            <person name="Park B.H."/>
            <person name="Bachman K.E."/>
            <person name="Papadopoulos N."/>
            <person name="Vogelstein B."/>
            <person name="Kinzler K.W."/>
            <person name="Velculescu V.E."/>
        </authorList>
    </citation>
    <scope>VARIANT [LARGE SCALE ANALYSIS] MET-43</scope>
</reference>
<accession>Q8WUI4</accession>
<accession>B3KY08</accession>
<accession>B4DWI0</accession>
<accession>B4E0Q5</accession>
<accession>Q6P1W9</accession>
<accession>Q6W9G7</accession>
<accession>Q7Z4K2</accession>
<accession>Q7Z5I1</accession>
<accession>Q96K01</accession>
<accession>Q9BR73</accession>
<accession>Q9H7L0</accession>
<accession>Q9NW41</accession>
<accession>Q9NWA9</accession>
<accession>Q9NYK9</accession>
<accession>Q9UFU7</accession>
<dbReference type="EC" id="3.5.1.98" evidence="1"/>
<dbReference type="EC" id="3.5.1.-" evidence="16"/>
<dbReference type="EMBL" id="AF239243">
    <property type="protein sequence ID" value="AAF63491.1"/>
    <property type="status" value="ALT_FRAME"/>
    <property type="molecule type" value="mRNA"/>
</dbReference>
<dbReference type="EMBL" id="AY302468">
    <property type="protein sequence ID" value="AAQ18232.1"/>
    <property type="molecule type" value="mRNA"/>
</dbReference>
<dbReference type="EMBL" id="AY321367">
    <property type="protein sequence ID" value="AAP84704.1"/>
    <property type="molecule type" value="mRNA"/>
</dbReference>
<dbReference type="EMBL" id="BT009771">
    <property type="protein sequence ID" value="AAP88773.1"/>
    <property type="molecule type" value="mRNA"/>
</dbReference>
<dbReference type="EMBL" id="AK001032">
    <property type="protein sequence ID" value="BAA91474.1"/>
    <property type="status" value="ALT_INIT"/>
    <property type="molecule type" value="mRNA"/>
</dbReference>
<dbReference type="EMBL" id="AK001190">
    <property type="protein sequence ID" value="BAA91545.1"/>
    <property type="status" value="ALT_INIT"/>
    <property type="molecule type" value="mRNA"/>
</dbReference>
<dbReference type="EMBL" id="AK024469">
    <property type="protein sequence ID" value="BAB15759.1"/>
    <property type="status" value="ALT_INIT"/>
    <property type="molecule type" value="mRNA"/>
</dbReference>
<dbReference type="EMBL" id="AK027781">
    <property type="protein sequence ID" value="BAB55363.1"/>
    <property type="status" value="ALT_INIT"/>
    <property type="molecule type" value="mRNA"/>
</dbReference>
<dbReference type="EMBL" id="AK122588">
    <property type="protein sequence ID" value="BAC56929.1"/>
    <property type="status" value="ALT_SEQ"/>
    <property type="molecule type" value="mRNA"/>
</dbReference>
<dbReference type="EMBL" id="AK128383">
    <property type="protein sequence ID" value="BAG54670.1"/>
    <property type="molecule type" value="mRNA"/>
</dbReference>
<dbReference type="EMBL" id="AK299292">
    <property type="protein sequence ID" value="BAG61307.1"/>
    <property type="molecule type" value="mRNA"/>
</dbReference>
<dbReference type="EMBL" id="AK301545">
    <property type="protein sequence ID" value="BAG63042.1"/>
    <property type="molecule type" value="mRNA"/>
</dbReference>
<dbReference type="EMBL" id="AK303481">
    <property type="protein sequence ID" value="BAG64517.1"/>
    <property type="molecule type" value="mRNA"/>
</dbReference>
<dbReference type="EMBL" id="AC004466">
    <property type="status" value="NOT_ANNOTATED_CDS"/>
    <property type="molecule type" value="Genomic_DNA"/>
</dbReference>
<dbReference type="EMBL" id="CH471111">
    <property type="protein sequence ID" value="EAW57957.1"/>
    <property type="molecule type" value="Genomic_DNA"/>
</dbReference>
<dbReference type="EMBL" id="BC006453">
    <property type="protein sequence ID" value="AAH06453.2"/>
    <property type="molecule type" value="mRNA"/>
</dbReference>
<dbReference type="EMBL" id="BC020505">
    <property type="protein sequence ID" value="AAH20505.2"/>
    <property type="molecule type" value="mRNA"/>
</dbReference>
<dbReference type="EMBL" id="BC064840">
    <property type="protein sequence ID" value="AAH64840.1"/>
    <property type="molecule type" value="mRNA"/>
</dbReference>
<dbReference type="EMBL" id="AL117455">
    <property type="protein sequence ID" value="CAB55935.1"/>
    <property type="molecule type" value="mRNA"/>
</dbReference>
<dbReference type="CCDS" id="CCDS41776.1">
    <molecule id="Q8WUI4-7"/>
</dbReference>
<dbReference type="CCDS" id="CCDS81685.1">
    <molecule id="Q8WUI4-6"/>
</dbReference>
<dbReference type="CCDS" id="CCDS8756.2">
    <molecule id="Q8WUI4-5"/>
</dbReference>
<dbReference type="PIR" id="T17245">
    <property type="entry name" value="T17245"/>
</dbReference>
<dbReference type="RefSeq" id="NP_001091886.1">
    <molecule id="Q8WUI4-7"/>
    <property type="nucleotide sequence ID" value="NM_001098416.4"/>
</dbReference>
<dbReference type="RefSeq" id="NP_001295019.1">
    <molecule id="Q8WUI4-6"/>
    <property type="nucleotide sequence ID" value="NM_001308090.2"/>
</dbReference>
<dbReference type="RefSeq" id="NP_056216.2">
    <molecule id="Q8WUI4-5"/>
    <property type="nucleotide sequence ID" value="NM_015401.5"/>
</dbReference>
<dbReference type="RefSeq" id="XP_011536783.1">
    <property type="nucleotide sequence ID" value="XM_011538481.1"/>
</dbReference>
<dbReference type="RefSeq" id="XP_011536784.1">
    <property type="nucleotide sequence ID" value="XM_011538482.1"/>
</dbReference>
<dbReference type="RefSeq" id="XP_047284938.1">
    <molecule id="Q8WUI4-1"/>
    <property type="nucleotide sequence ID" value="XM_047428982.1"/>
</dbReference>
<dbReference type="RefSeq" id="XP_047284940.1">
    <molecule id="Q8WUI4-1"/>
    <property type="nucleotide sequence ID" value="XM_047428984.1"/>
</dbReference>
<dbReference type="RefSeq" id="XP_054228226.1">
    <molecule id="Q8WUI4-1"/>
    <property type="nucleotide sequence ID" value="XM_054372251.1"/>
</dbReference>
<dbReference type="RefSeq" id="XP_054228228.1">
    <molecule id="Q8WUI4-1"/>
    <property type="nucleotide sequence ID" value="XM_054372253.1"/>
</dbReference>
<dbReference type="PDB" id="3C0Y">
    <property type="method" value="X-ray"/>
    <property type="resolution" value="2.10 A"/>
    <property type="chains" value="A/B/C=482-903"/>
</dbReference>
<dbReference type="PDB" id="3C0Z">
    <property type="method" value="X-ray"/>
    <property type="resolution" value="2.10 A"/>
    <property type="chains" value="A/B/C=482-903"/>
</dbReference>
<dbReference type="PDB" id="3C10">
    <property type="method" value="X-ray"/>
    <property type="resolution" value="2.00 A"/>
    <property type="chains" value="A/B/C=482-903"/>
</dbReference>
<dbReference type="PDB" id="3ZNR">
    <property type="method" value="X-ray"/>
    <property type="resolution" value="2.40 A"/>
    <property type="chains" value="A/B/C=482-903"/>
</dbReference>
<dbReference type="PDB" id="3ZNS">
    <property type="method" value="X-ray"/>
    <property type="resolution" value="2.45 A"/>
    <property type="chains" value="A/B/C=482-903"/>
</dbReference>
<dbReference type="PDB" id="8Q9Q">
    <property type="method" value="X-ray"/>
    <property type="resolution" value="2.11 A"/>
    <property type="chains" value="X=83-97"/>
</dbReference>
<dbReference type="PDBsum" id="3C0Y"/>
<dbReference type="PDBsum" id="3C0Z"/>
<dbReference type="PDBsum" id="3C10"/>
<dbReference type="PDBsum" id="3ZNR"/>
<dbReference type="PDBsum" id="3ZNS"/>
<dbReference type="PDBsum" id="8Q9Q"/>
<dbReference type="SMR" id="Q8WUI4"/>
<dbReference type="BioGRID" id="119613">
    <property type="interactions" value="145"/>
</dbReference>
<dbReference type="CORUM" id="Q8WUI4"/>
<dbReference type="DIP" id="DIP-29860N"/>
<dbReference type="FunCoup" id="Q8WUI4">
    <property type="interactions" value="3050"/>
</dbReference>
<dbReference type="IntAct" id="Q8WUI4">
    <property type="interactions" value="69"/>
</dbReference>
<dbReference type="MINT" id="Q8WUI4"/>
<dbReference type="STRING" id="9606.ENSP00000080059"/>
<dbReference type="BindingDB" id="Q8WUI4"/>
<dbReference type="ChEMBL" id="CHEMBL2716"/>
<dbReference type="DrugBank" id="DB12565">
    <property type="generic name" value="Abexinostat"/>
</dbReference>
<dbReference type="DrugBank" id="DB05015">
    <property type="generic name" value="Belinostat"/>
</dbReference>
<dbReference type="DrugBank" id="DB01262">
    <property type="generic name" value="Decitabine"/>
</dbReference>
<dbReference type="DrugBank" id="DB11841">
    <property type="generic name" value="Entinostat"/>
</dbReference>
<dbReference type="DrugBank" id="DB12645">
    <property type="generic name" value="Givinostat"/>
</dbReference>
<dbReference type="DrugBank" id="DB14979">
    <property type="generic name" value="Martinostat"/>
</dbReference>
<dbReference type="DrugBank" id="DB06603">
    <property type="generic name" value="Panobinostat"/>
</dbReference>
<dbReference type="DrugBank" id="DB06819">
    <property type="generic name" value="Phenylbutyric acid"/>
</dbReference>
<dbReference type="DrugBank" id="DB03766">
    <property type="generic name" value="Propanoic acid"/>
</dbReference>
<dbReference type="DrugBank" id="DB12847">
    <property type="generic name" value="Pyroxamide"/>
</dbReference>
<dbReference type="DrugBank" id="DB06176">
    <property type="generic name" value="Romidepsin"/>
</dbReference>
<dbReference type="DrugBank" id="DB04297">
    <property type="generic name" value="Trichostatin A"/>
</dbReference>
<dbReference type="DrugBank" id="DB00313">
    <property type="generic name" value="Valproic acid"/>
</dbReference>
<dbReference type="DrugBank" id="DB02546">
    <property type="generic name" value="Vorinostat"/>
</dbReference>
<dbReference type="DrugCentral" id="Q8WUI4"/>
<dbReference type="GuidetoPHARMACOLOGY" id="2661"/>
<dbReference type="GlyGen" id="Q8WUI4">
    <property type="glycosylation" value="2 sites, 1 O-linked glycan (1 site)"/>
</dbReference>
<dbReference type="iPTMnet" id="Q8WUI4"/>
<dbReference type="PhosphoSitePlus" id="Q8WUI4"/>
<dbReference type="BioMuta" id="HDAC7"/>
<dbReference type="DMDM" id="30913097"/>
<dbReference type="jPOST" id="Q8WUI4"/>
<dbReference type="MassIVE" id="Q8WUI4"/>
<dbReference type="PaxDb" id="9606-ENSP00000080059"/>
<dbReference type="PeptideAtlas" id="Q8WUI4"/>
<dbReference type="ProteomicsDB" id="74678">
    <molecule id="Q8WUI4-1"/>
</dbReference>
<dbReference type="ProteomicsDB" id="74679">
    <molecule id="Q8WUI4-10"/>
</dbReference>
<dbReference type="ProteomicsDB" id="74680">
    <molecule id="Q8WUI4-2"/>
</dbReference>
<dbReference type="ProteomicsDB" id="74681">
    <molecule id="Q8WUI4-3"/>
</dbReference>
<dbReference type="ProteomicsDB" id="74682">
    <molecule id="Q8WUI4-4"/>
</dbReference>
<dbReference type="ProteomicsDB" id="74683">
    <molecule id="Q8WUI4-5"/>
</dbReference>
<dbReference type="ProteomicsDB" id="74684">
    <molecule id="Q8WUI4-6"/>
</dbReference>
<dbReference type="ProteomicsDB" id="74685">
    <molecule id="Q8WUI4-7"/>
</dbReference>
<dbReference type="ProteomicsDB" id="74686">
    <molecule id="Q8WUI4-8"/>
</dbReference>
<dbReference type="ProteomicsDB" id="74687">
    <molecule id="Q8WUI4-9"/>
</dbReference>
<dbReference type="Pumba" id="Q8WUI4"/>
<dbReference type="ABCD" id="Q8WUI4">
    <property type="antibodies" value="1 sequenced antibody"/>
</dbReference>
<dbReference type="Antibodypedia" id="1412">
    <property type="antibodies" value="656 antibodies from 43 providers"/>
</dbReference>
<dbReference type="DNASU" id="51564"/>
<dbReference type="Ensembl" id="ENST00000080059.12">
    <molecule id="Q8WUI4-5"/>
    <property type="protein sequence ID" value="ENSP00000080059.7"/>
    <property type="gene ID" value="ENSG00000061273.18"/>
</dbReference>
<dbReference type="Ensembl" id="ENST00000354334.7">
    <molecule id="Q8WUI4-7"/>
    <property type="protein sequence ID" value="ENSP00000351326.3"/>
    <property type="gene ID" value="ENSG00000061273.18"/>
</dbReference>
<dbReference type="Ensembl" id="ENST00000427332.6">
    <molecule id="Q8WUI4-1"/>
    <property type="protein sequence ID" value="ENSP00000404394.2"/>
    <property type="gene ID" value="ENSG00000061273.18"/>
</dbReference>
<dbReference type="Ensembl" id="ENST00000552960.5">
    <molecule id="Q8WUI4-6"/>
    <property type="protein sequence ID" value="ENSP00000448532.1"/>
    <property type="gene ID" value="ENSG00000061273.18"/>
</dbReference>
<dbReference type="GeneID" id="51564"/>
<dbReference type="KEGG" id="hsa:51564"/>
<dbReference type="MANE-Select" id="ENST00000080059.12">
    <molecule id="Q8WUI4-5"/>
    <property type="protein sequence ID" value="ENSP00000080059.7"/>
    <property type="RefSeq nucleotide sequence ID" value="NM_015401.5"/>
    <property type="RefSeq protein sequence ID" value="NP_056216.2"/>
</dbReference>
<dbReference type="UCSC" id="uc001rqj.5">
    <molecule id="Q8WUI4-1"/>
    <property type="organism name" value="human"/>
</dbReference>
<dbReference type="AGR" id="HGNC:14067"/>
<dbReference type="CTD" id="51564"/>
<dbReference type="DisGeNET" id="51564"/>
<dbReference type="GeneCards" id="HDAC7"/>
<dbReference type="HGNC" id="HGNC:14067">
    <property type="gene designation" value="HDAC7"/>
</dbReference>
<dbReference type="HPA" id="ENSG00000061273">
    <property type="expression patterns" value="Low tissue specificity"/>
</dbReference>
<dbReference type="MalaCards" id="HDAC7"/>
<dbReference type="MIM" id="606542">
    <property type="type" value="gene"/>
</dbReference>
<dbReference type="neXtProt" id="NX_Q8WUI4"/>
<dbReference type="OpenTargets" id="ENSG00000061273"/>
<dbReference type="PharmGKB" id="PA162390579"/>
<dbReference type="VEuPathDB" id="HostDB:ENSG00000061273"/>
<dbReference type="eggNOG" id="KOG1343">
    <property type="taxonomic scope" value="Eukaryota"/>
</dbReference>
<dbReference type="GeneTree" id="ENSGT00940000159065"/>
<dbReference type="HOGENOM" id="CLU_006530_0_1_1"/>
<dbReference type="InParanoid" id="Q8WUI4"/>
<dbReference type="OMA" id="WPLSWTR"/>
<dbReference type="OrthoDB" id="424012at2759"/>
<dbReference type="PAN-GO" id="Q8WUI4">
    <property type="GO annotations" value="6 GO annotations based on evolutionary models"/>
</dbReference>
<dbReference type="PhylomeDB" id="Q8WUI4"/>
<dbReference type="TreeFam" id="TF106174"/>
<dbReference type="BRENDA" id="3.5.1.98">
    <property type="organism ID" value="2681"/>
</dbReference>
<dbReference type="PathwayCommons" id="Q8WUI4"/>
<dbReference type="Reactome" id="R-HSA-2122947">
    <property type="pathway name" value="NOTCH1 Intracellular Domain Regulates Transcription"/>
</dbReference>
<dbReference type="Reactome" id="R-HSA-2644606">
    <property type="pathway name" value="Constitutive Signaling by NOTCH1 PEST Domain Mutants"/>
</dbReference>
<dbReference type="Reactome" id="R-HSA-2894862">
    <property type="pathway name" value="Constitutive Signaling by NOTCH1 HD+PEST Domain Mutants"/>
</dbReference>
<dbReference type="Reactome" id="R-HSA-3108214">
    <property type="pathway name" value="SUMOylation of DNA damage response and repair proteins"/>
</dbReference>
<dbReference type="Reactome" id="R-HSA-350054">
    <property type="pathway name" value="Notch-HLH transcription pathway"/>
</dbReference>
<dbReference type="Reactome" id="R-HSA-8943724">
    <property type="pathway name" value="Regulation of PTEN gene transcription"/>
</dbReference>
<dbReference type="SignaLink" id="Q8WUI4"/>
<dbReference type="SIGNOR" id="Q8WUI4"/>
<dbReference type="BioGRID-ORCS" id="51564">
    <property type="hits" value="31 hits in 1173 CRISPR screens"/>
</dbReference>
<dbReference type="ChiTaRS" id="HDAC7">
    <property type="organism name" value="human"/>
</dbReference>
<dbReference type="EvolutionaryTrace" id="Q8WUI4"/>
<dbReference type="GeneWiki" id="HDAC7"/>
<dbReference type="GenomeRNAi" id="51564"/>
<dbReference type="Pharos" id="Q8WUI4">
    <property type="development level" value="Tclin"/>
</dbReference>
<dbReference type="PRO" id="PR:Q8WUI4"/>
<dbReference type="Proteomes" id="UP000005640">
    <property type="component" value="Chromosome 12"/>
</dbReference>
<dbReference type="RNAct" id="Q8WUI4">
    <property type="molecule type" value="protein"/>
</dbReference>
<dbReference type="Bgee" id="ENSG00000061273">
    <property type="expression patterns" value="Expressed in sural nerve and 193 other cell types or tissues"/>
</dbReference>
<dbReference type="ExpressionAtlas" id="Q8WUI4">
    <property type="expression patterns" value="baseline and differential"/>
</dbReference>
<dbReference type="GO" id="GO:0005737">
    <property type="term" value="C:cytoplasm"/>
    <property type="evidence" value="ECO:0000314"/>
    <property type="project" value="UniProtKB"/>
</dbReference>
<dbReference type="GO" id="GO:0005829">
    <property type="term" value="C:cytosol"/>
    <property type="evidence" value="ECO:0000314"/>
    <property type="project" value="HPA"/>
</dbReference>
<dbReference type="GO" id="GO:0000118">
    <property type="term" value="C:histone deacetylase complex"/>
    <property type="evidence" value="ECO:0000318"/>
    <property type="project" value="GO_Central"/>
</dbReference>
<dbReference type="GO" id="GO:0005654">
    <property type="term" value="C:nucleoplasm"/>
    <property type="evidence" value="ECO:0000304"/>
    <property type="project" value="Reactome"/>
</dbReference>
<dbReference type="GO" id="GO:0005634">
    <property type="term" value="C:nucleus"/>
    <property type="evidence" value="ECO:0000314"/>
    <property type="project" value="UniProtKB"/>
</dbReference>
<dbReference type="GO" id="GO:0071889">
    <property type="term" value="F:14-3-3 protein binding"/>
    <property type="evidence" value="ECO:0000314"/>
    <property type="project" value="UniProtKB"/>
</dbReference>
<dbReference type="GO" id="GO:0003682">
    <property type="term" value="F:chromatin binding"/>
    <property type="evidence" value="ECO:0007669"/>
    <property type="project" value="Ensembl"/>
</dbReference>
<dbReference type="GO" id="GO:0140297">
    <property type="term" value="F:DNA-binding transcription factor binding"/>
    <property type="evidence" value="ECO:0000353"/>
    <property type="project" value="UniProtKB"/>
</dbReference>
<dbReference type="GO" id="GO:0004407">
    <property type="term" value="F:histone deacetylase activity"/>
    <property type="evidence" value="ECO:0000250"/>
    <property type="project" value="UniProtKB"/>
</dbReference>
<dbReference type="GO" id="GO:0141221">
    <property type="term" value="F:histone deacetylase activity, hydrolytic mechanism"/>
    <property type="evidence" value="ECO:0007669"/>
    <property type="project" value="UniProtKB-EC"/>
</dbReference>
<dbReference type="GO" id="GO:0046872">
    <property type="term" value="F:metal ion binding"/>
    <property type="evidence" value="ECO:0007669"/>
    <property type="project" value="UniProtKB-KW"/>
</dbReference>
<dbReference type="GO" id="GO:0019901">
    <property type="term" value="F:protein kinase binding"/>
    <property type="evidence" value="ECO:0000353"/>
    <property type="project" value="UniProtKB"/>
</dbReference>
<dbReference type="GO" id="GO:0005080">
    <property type="term" value="F:protein kinase C binding"/>
    <property type="evidence" value="ECO:0000353"/>
    <property type="project" value="UniProtKB"/>
</dbReference>
<dbReference type="GO" id="GO:0033558">
    <property type="term" value="F:protein lysine deacetylase activity"/>
    <property type="evidence" value="ECO:0000314"/>
    <property type="project" value="UniProtKB"/>
</dbReference>
<dbReference type="GO" id="GO:0019789">
    <property type="term" value="F:SUMO transferase activity"/>
    <property type="evidence" value="ECO:0000304"/>
    <property type="project" value="Reactome"/>
</dbReference>
<dbReference type="GO" id="GO:0003714">
    <property type="term" value="F:transcription corepressor activity"/>
    <property type="evidence" value="ECO:0007669"/>
    <property type="project" value="Ensembl"/>
</dbReference>
<dbReference type="GO" id="GO:0007043">
    <property type="term" value="P:cell-cell junction assembly"/>
    <property type="evidence" value="ECO:0007669"/>
    <property type="project" value="Ensembl"/>
</dbReference>
<dbReference type="GO" id="GO:0040029">
    <property type="term" value="P:epigenetic regulation of gene expression"/>
    <property type="evidence" value="ECO:0000318"/>
    <property type="project" value="GO_Central"/>
</dbReference>
<dbReference type="GO" id="GO:0032703">
    <property type="term" value="P:negative regulation of interleukin-2 production"/>
    <property type="evidence" value="ECO:0000314"/>
    <property type="project" value="BHF-UCL"/>
</dbReference>
<dbReference type="GO" id="GO:1901223">
    <property type="term" value="P:negative regulation of non-canonical NF-kappaB signal transduction"/>
    <property type="evidence" value="ECO:0000315"/>
    <property type="project" value="UniProtKB"/>
</dbReference>
<dbReference type="GO" id="GO:0045668">
    <property type="term" value="P:negative regulation of osteoblast differentiation"/>
    <property type="evidence" value="ECO:0000315"/>
    <property type="project" value="UniProtKB"/>
</dbReference>
<dbReference type="GO" id="GO:0000122">
    <property type="term" value="P:negative regulation of transcription by RNA polymerase II"/>
    <property type="evidence" value="ECO:0007669"/>
    <property type="project" value="Ensembl"/>
</dbReference>
<dbReference type="GO" id="GO:0090050">
    <property type="term" value="P:positive regulation of cell migration involved in sprouting angiogenesis"/>
    <property type="evidence" value="ECO:0000315"/>
    <property type="project" value="BHF-UCL"/>
</dbReference>
<dbReference type="GO" id="GO:0006476">
    <property type="term" value="P:protein deacetylation"/>
    <property type="evidence" value="ECO:0000315"/>
    <property type="project" value="UniProtKB"/>
</dbReference>
<dbReference type="GO" id="GO:0016925">
    <property type="term" value="P:protein sumoylation"/>
    <property type="evidence" value="ECO:0000304"/>
    <property type="project" value="Reactome"/>
</dbReference>
<dbReference type="GO" id="GO:0050684">
    <property type="term" value="P:regulation of mRNA processing"/>
    <property type="evidence" value="ECO:0000314"/>
    <property type="project" value="UniProt"/>
</dbReference>
<dbReference type="GO" id="GO:0001570">
    <property type="term" value="P:vasculogenesis"/>
    <property type="evidence" value="ECO:0007669"/>
    <property type="project" value="Ensembl"/>
</dbReference>
<dbReference type="CDD" id="cd10008">
    <property type="entry name" value="HDAC7"/>
    <property type="match status" value="1"/>
</dbReference>
<dbReference type="FunFam" id="3.40.800.20:FF:000002">
    <property type="entry name" value="Histone deacetylase"/>
    <property type="match status" value="1"/>
</dbReference>
<dbReference type="Gene3D" id="3.40.800.20">
    <property type="entry name" value="Histone deacetylase domain"/>
    <property type="match status" value="1"/>
</dbReference>
<dbReference type="InterPro" id="IPR046949">
    <property type="entry name" value="HDAC4/5/7/9"/>
</dbReference>
<dbReference type="InterPro" id="IPR050284">
    <property type="entry name" value="HDAC_PDAC"/>
</dbReference>
<dbReference type="InterPro" id="IPR000286">
    <property type="entry name" value="His_deacetylse"/>
</dbReference>
<dbReference type="InterPro" id="IPR023801">
    <property type="entry name" value="His_deacetylse_dom"/>
</dbReference>
<dbReference type="InterPro" id="IPR037138">
    <property type="entry name" value="His_deacetylse_dom_sf"/>
</dbReference>
<dbReference type="InterPro" id="IPR023696">
    <property type="entry name" value="Ureohydrolase_dom_sf"/>
</dbReference>
<dbReference type="PANTHER" id="PTHR10625:SF42">
    <property type="entry name" value="HISTONE DEACETYLASE 7"/>
    <property type="match status" value="1"/>
</dbReference>
<dbReference type="PANTHER" id="PTHR10625">
    <property type="entry name" value="HISTONE DEACETYLASE HDAC1-RELATED"/>
    <property type="match status" value="1"/>
</dbReference>
<dbReference type="Pfam" id="PF00850">
    <property type="entry name" value="Hist_deacetyl"/>
    <property type="match status" value="1"/>
</dbReference>
<dbReference type="PIRSF" id="PIRSF037911">
    <property type="entry name" value="HDAC_II_euk"/>
    <property type="match status" value="1"/>
</dbReference>
<dbReference type="PRINTS" id="PR01270">
    <property type="entry name" value="HDASUPER"/>
</dbReference>
<dbReference type="SUPFAM" id="SSF52768">
    <property type="entry name" value="Arginase/deacetylase"/>
    <property type="match status" value="1"/>
</dbReference>
<proteinExistence type="evidence at protein level"/>
<keyword id="KW-0002">3D-structure</keyword>
<keyword id="KW-0025">Alternative splicing</keyword>
<keyword id="KW-0156">Chromatin regulator</keyword>
<keyword id="KW-0963">Cytoplasm</keyword>
<keyword id="KW-0378">Hydrolase</keyword>
<keyword id="KW-0479">Metal-binding</keyword>
<keyword id="KW-0539">Nucleus</keyword>
<keyword id="KW-0597">Phosphoprotein</keyword>
<keyword id="KW-1267">Proteomics identification</keyword>
<keyword id="KW-1185">Reference proteome</keyword>
<keyword id="KW-0677">Repeat</keyword>
<keyword id="KW-0678">Repressor</keyword>
<keyword id="KW-0804">Transcription</keyword>
<keyword id="KW-0805">Transcription regulation</keyword>
<keyword id="KW-0862">Zinc</keyword>